<name>CAV1_HUMAN</name>
<evidence type="ECO:0000250" key="1"/>
<evidence type="ECO:0000250" key="2">
    <source>
        <dbReference type="UniProtKB" id="P33724"/>
    </source>
</evidence>
<evidence type="ECO:0000250" key="3">
    <source>
        <dbReference type="UniProtKB" id="P41350"/>
    </source>
</evidence>
<evidence type="ECO:0000250" key="4">
    <source>
        <dbReference type="UniProtKB" id="P49817"/>
    </source>
</evidence>
<evidence type="ECO:0000250" key="5">
    <source>
        <dbReference type="UniProtKB" id="Q2IBA5"/>
    </source>
</evidence>
<evidence type="ECO:0000255" key="6"/>
<evidence type="ECO:0000269" key="7">
    <source>
    </source>
</evidence>
<evidence type="ECO:0000269" key="8">
    <source>
    </source>
</evidence>
<evidence type="ECO:0000269" key="9">
    <source>
    </source>
</evidence>
<evidence type="ECO:0000269" key="10">
    <source>
    </source>
</evidence>
<evidence type="ECO:0000269" key="11">
    <source>
    </source>
</evidence>
<evidence type="ECO:0000269" key="12">
    <source>
    </source>
</evidence>
<evidence type="ECO:0000269" key="13">
    <source>
    </source>
</evidence>
<evidence type="ECO:0000269" key="14">
    <source>
    </source>
</evidence>
<evidence type="ECO:0000269" key="15">
    <source>
    </source>
</evidence>
<evidence type="ECO:0000269" key="16">
    <source>
    </source>
</evidence>
<evidence type="ECO:0000269" key="17">
    <source>
    </source>
</evidence>
<evidence type="ECO:0000269" key="18">
    <source>
    </source>
</evidence>
<evidence type="ECO:0000269" key="19">
    <source>
    </source>
</evidence>
<evidence type="ECO:0000269" key="20">
    <source>
    </source>
</evidence>
<evidence type="ECO:0000269" key="21">
    <source>
    </source>
</evidence>
<evidence type="ECO:0000269" key="22">
    <source>
    </source>
</evidence>
<evidence type="ECO:0000269" key="23">
    <source>
    </source>
</evidence>
<evidence type="ECO:0000269" key="24">
    <source>
    </source>
</evidence>
<evidence type="ECO:0000269" key="25">
    <source>
    </source>
</evidence>
<evidence type="ECO:0000269" key="26">
    <source>
    </source>
</evidence>
<evidence type="ECO:0000269" key="27">
    <source>
    </source>
</evidence>
<evidence type="ECO:0000305" key="28"/>
<evidence type="ECO:0007744" key="29">
    <source>
    </source>
</evidence>
<evidence type="ECO:0007744" key="30">
    <source>
    </source>
</evidence>
<evidence type="ECO:0007744" key="31">
    <source>
    </source>
</evidence>
<evidence type="ECO:0007744" key="32">
    <source>
    </source>
</evidence>
<evidence type="ECO:0007744" key="33">
    <source>
    </source>
</evidence>
<evidence type="ECO:0007744" key="34">
    <source>
    </source>
</evidence>
<evidence type="ECO:0007744" key="35">
    <source>
    </source>
</evidence>
<evidence type="ECO:0007744" key="36">
    <source>
    </source>
</evidence>
<evidence type="ECO:0007829" key="37">
    <source>
        <dbReference type="PDB" id="7SC0"/>
    </source>
</evidence>
<sequence length="178" mass="20472">MSGGKYVDSEGHLYTVPIREQGNIYKPNNKAMADELSEKQVYDAHTKEIDLVNRDPKHLNDDVVKIDFEDVIAEPEGTHSFDGIWKASFTTFTVTKYWFYRLLSALFGIPMALIWGIYFAILSFLHIWAVVPCIKSFLIEIQCISRVYSIYVHTVCDPLFEAVGKIFSNVRINLQKEI</sequence>
<keyword id="KW-0002">3D-structure</keyword>
<keyword id="KW-0007">Acetylation</keyword>
<keyword id="KW-0024">Alternative initiation</keyword>
<keyword id="KW-1003">Cell membrane</keyword>
<keyword id="KW-1022">Congenital generalized lipodystrophy</keyword>
<keyword id="KW-0219">Diabetes mellitus</keyword>
<keyword id="KW-0903">Direct protein sequencing</keyword>
<keyword id="KW-0225">Disease variant</keyword>
<keyword id="KW-0333">Golgi apparatus</keyword>
<keyword id="KW-0945">Host-virus interaction</keyword>
<keyword id="KW-1017">Isopeptide bond</keyword>
<keyword id="KW-0449">Lipoprotein</keyword>
<keyword id="KW-0472">Membrane</keyword>
<keyword id="KW-0564">Palmitate</keyword>
<keyword id="KW-0597">Phosphoprotein</keyword>
<keyword id="KW-1267">Proteomics identification</keyword>
<keyword id="KW-1185">Reference proteome</keyword>
<keyword id="KW-0832">Ubl conjugation</keyword>
<comment type="function">
    <text evidence="4 7 14 17 25">May act as a scaffolding protein within caveolar membranes (PubMed:11751885). Forms a stable heterooligomeric complex with CAV2 that targets to lipid rafts and drives caveolae formation. Mediates the recruitment of CAVIN proteins (CAVIN1/2/3/4) to the caveolae (PubMed:19262564). Interacts directly with G-protein alpha subunits and can functionally regulate their activity (By similarity). Involved in the costimulatory signal essential for T-cell receptor (TCR)-mediated T-cell activation. Its binding to DPP4 induces T-cell proliferation and NF-kappa-B activation in a T-cell receptor/CD3-dependent manner (PubMed:17287217). Recruits CTNNB1 to caveolar membranes and may regulate CTNNB1-mediated signaling through the Wnt pathway (By similarity). Negatively regulates TGFB1-mediated activation of SMAD2/3 by mediating the internalization of TGFBR1 from membrane rafts leading to its subsequent degradation (PubMed:25893292). Binds 20(S)-hydroxycholesterol (20(S)-OHC) (By similarity).</text>
</comment>
<comment type="subunit">
    <text evidence="3 4 5 7 8 13 14 17 18 19 21 22 24 25">Homooligomer (PubMed:25588833). Interacts with GLIPR2 (PubMed:11865038). Interacts with NOSTRIN (PubMed:16807357). Interacts with SNAP25 and STX1A (By similarity). Interacts (via the N-terminus) with DPP4; the interaction is direct (PubMed:17287217). Interacts with CTNNB1, CDH1 and JUP. Interacts with PACSIN2; this interaction induces membrane tubulation (By similarity). Interacts with SLC7A9 (By similarity). Interacts with BMX and BTK (PubMed:11751885). Interacts with TGFBR1 (PubMed:25893292). Interacts with CAVIN3 (via leucine-zipper domain) in a cholesterol-sensitive manner (PubMed:19262564, PubMed:25588833). Interacts with CAVIN1 (PubMed:25588833). Interacts with EHD2 in a cholesterol-dependent manner (PubMed:25588833). Forms a ternary complex with UBXN6 and VCP; mediates CAV1 targeting to lysosomes for degradation (PubMed:21822278, PubMed:23335559). Interacts with ABCG1; this interaction regulates ABCG1-mediated cholesterol efflux (PubMed:24576892). Interacts with NEU3; this interaction enhances NEU3 sialidase activity within caveola. Interacts (via C-terminus) with SPRY1, SPRY2 (via C-terminus), SPRY3, and SPRY4 (By similarity). Interacts with IGFBP5; this interaction allows trafficking of IGFBP5 from the plasma membrane to the nucleus (PubMed:20345844).</text>
</comment>
<comment type="subunit">
    <text evidence="12">(Microbial infection) Interacts with rotavirus A NSP4.</text>
</comment>
<comment type="subunit">
    <text evidence="23">(Microbial infection) Interacts with human respiratory syncytial virus (HRSV) matrix protein; this interaction probably facilitates viral budding.</text>
</comment>
<comment type="interaction">
    <interactant intactId="EBI-603614">
        <id>Q03135</id>
    </interactant>
    <interactant intactId="EBI-77613">
        <id>P05067</id>
        <label>APP</label>
    </interactant>
    <organismsDiffer>false</organismsDiffer>
    <experiments>3</experiments>
</comment>
<comment type="interaction">
    <interactant intactId="EBI-603614">
        <id>Q03135</id>
    </interactant>
    <interactant intactId="EBI-519672">
        <id>P55957</id>
        <label>BID</label>
    </interactant>
    <organismsDiffer>false</organismsDiffer>
    <experiments>3</experiments>
</comment>
<comment type="interaction">
    <interactant intactId="EBI-603614">
        <id>Q03135</id>
    </interactant>
    <interactant intactId="EBI-603607">
        <id>P51636</id>
        <label>CAV2</label>
    </interactant>
    <organismsDiffer>false</organismsDiffer>
    <experiments>5</experiments>
</comment>
<comment type="interaction">
    <interactant intactId="EBI-603614">
        <id>Q03135</id>
    </interactant>
    <interactant intactId="EBI-2559016">
        <id>Q6NZI2</id>
        <label>CAVIN1</label>
    </interactant>
    <organismsDiffer>false</organismsDiffer>
    <experiments>10</experiments>
</comment>
<comment type="interaction">
    <interactant intactId="EBI-603614">
        <id>Q03135</id>
    </interactant>
    <interactant intactId="EBI-742141">
        <id>O95810</id>
        <label>CAVIN2</label>
    </interactant>
    <organismsDiffer>false</organismsDiffer>
    <experiments>6</experiments>
</comment>
<comment type="interaction">
    <interactant intactId="EBI-603614">
        <id>Q03135</id>
    </interactant>
    <interactant intactId="EBI-3893101">
        <id>Q969G5</id>
        <label>CAVIN3</label>
    </interactant>
    <organismsDiffer>false</organismsDiffer>
    <experiments>11</experiments>
</comment>
<comment type="interaction">
    <interactant intactId="EBI-603614">
        <id>Q03135</id>
    </interactant>
    <interactant intactId="EBI-9087876">
        <id>P48730-2</id>
        <label>CSNK1D</label>
    </interactant>
    <organismsDiffer>false</organismsDiffer>
    <experiments>3</experiments>
</comment>
<comment type="interaction">
    <interactant intactId="EBI-603614">
        <id>Q03135</id>
    </interactant>
    <interactant intactId="EBI-297353">
        <id>P00533</id>
        <label>EGFR</label>
    </interactant>
    <organismsDiffer>false</organismsDiffer>
    <experiments>7</experiments>
</comment>
<comment type="interaction">
    <interactant intactId="EBI-603614">
        <id>Q03135</id>
    </interactant>
    <interactant intactId="EBI-2803960">
        <id>P25116</id>
        <label>F2R</label>
    </interactant>
    <organismsDiffer>false</organismsDiffer>
    <experiments>3</experiments>
</comment>
<comment type="interaction">
    <interactant intactId="EBI-603614">
        <id>Q03135</id>
    </interactant>
    <interactant intactId="EBI-494743">
        <id>P25445</id>
        <label>FAS</label>
    </interactant>
    <organismsDiffer>false</organismsDiffer>
    <experiments>3</experiments>
</comment>
<comment type="interaction">
    <interactant intactId="EBI-603614">
        <id>Q03135</id>
    </interactant>
    <interactant intactId="EBI-15749113">
        <id>P25445-1</id>
        <label>FAS</label>
    </interactant>
    <organismsDiffer>false</organismsDiffer>
    <experiments>3</experiments>
</comment>
<comment type="interaction">
    <interactant intactId="EBI-603614">
        <id>Q03135</id>
    </interactant>
    <interactant intactId="EBI-1215527">
        <id>P41134</id>
        <label>ID1</label>
    </interactant>
    <organismsDiffer>false</organismsDiffer>
    <experiments>6</experiments>
</comment>
<comment type="interaction">
    <interactant intactId="EBI-603614">
        <id>Q03135</id>
    </interactant>
    <interactant intactId="EBI-720643">
        <id>Q12809</id>
        <label>KCNH2</label>
    </interactant>
    <organismsDiffer>false</organismsDiffer>
    <experiments>5</experiments>
</comment>
<comment type="interaction">
    <interactant intactId="EBI-603614">
        <id>Q03135</id>
    </interactant>
    <interactant intactId="EBI-910915">
        <id>O75581</id>
        <label>LRP6</label>
    </interactant>
    <organismsDiffer>false</organismsDiffer>
    <experiments>3</experiments>
</comment>
<comment type="interaction">
    <interactant intactId="EBI-603614">
        <id>Q03135</id>
    </interactant>
    <interactant intactId="EBI-373144">
        <id>Q9GZQ8</id>
        <label>MAP1LC3B</label>
    </interactant>
    <organismsDiffer>false</organismsDiffer>
    <experiments>2</experiments>
</comment>
<comment type="interaction">
    <interactant intactId="EBI-603614">
        <id>Q03135</id>
    </interactant>
    <interactant intactId="EBI-1003422">
        <id>Q07820</id>
        <label>MCL1</label>
    </interactant>
    <organismsDiffer>false</organismsDiffer>
    <experiments>3</experiments>
</comment>
<comment type="interaction">
    <interactant intactId="EBI-603614">
        <id>Q03135</id>
    </interactant>
    <interactant intactId="EBI-2368710">
        <id>O15118</id>
        <label>NPC1</label>
    </interactant>
    <organismsDiffer>false</organismsDiffer>
    <experiments>3</experiments>
</comment>
<comment type="interaction">
    <interactant intactId="EBI-603614">
        <id>Q03135</id>
    </interactant>
    <interactant intactId="EBI-79387">
        <id>P19174</id>
        <label>PLCG1</label>
    </interactant>
    <organismsDiffer>false</organismsDiffer>
    <experiments>2</experiments>
</comment>
<comment type="interaction">
    <interactant intactId="EBI-603614">
        <id>Q03135</id>
    </interactant>
    <interactant intactId="EBI-968788">
        <id>P18031</id>
        <label>PTPN1</label>
    </interactant>
    <organismsDiffer>false</organismsDiffer>
    <experiments>5</experiments>
</comment>
<comment type="interaction">
    <interactant intactId="EBI-603614">
        <id>Q03135</id>
    </interactant>
    <interactant intactId="EBI-10179046">
        <id>O00194</id>
        <label>RAB27B</label>
    </interactant>
    <organismsDiffer>false</organismsDiffer>
    <experiments>2</experiments>
</comment>
<comment type="interaction">
    <interactant intactId="EBI-603614">
        <id>Q03135</id>
    </interactant>
    <interactant intactId="EBI-413628">
        <id>P63000</id>
        <label>RAC1</label>
    </interactant>
    <organismsDiffer>false</organismsDiffer>
    <experiments>3</experiments>
</comment>
<comment type="interaction">
    <interactant intactId="EBI-603614">
        <id>Q03135</id>
    </interactant>
    <interactant intactId="EBI-1026476">
        <id>P20936</id>
        <label>RASA1</label>
    </interactant>
    <organismsDiffer>false</organismsDiffer>
    <experiments>2</experiments>
</comment>
<comment type="interaction">
    <interactant intactId="EBI-603614">
        <id>Q03135</id>
    </interactant>
    <interactant intactId="EBI-1050999">
        <id>P22307</id>
        <label>SCP2</label>
    </interactant>
    <organismsDiffer>false</organismsDiffer>
    <experiments>3</experiments>
</comment>
<comment type="interaction">
    <interactant intactId="EBI-603614">
        <id>Q03135</id>
    </interactant>
    <interactant intactId="EBI-458376">
        <id>Q15208</id>
        <label>STK38</label>
    </interactant>
    <organismsDiffer>false</organismsDiffer>
    <experiments>3</experiments>
</comment>
<comment type="interaction">
    <interactant intactId="EBI-603614">
        <id>Q03135</id>
    </interactant>
    <interactant intactId="EBI-929665">
        <id>P48995</id>
        <label>TRPC1</label>
    </interactant>
    <organismsDiffer>false</organismsDiffer>
    <experiments>7</experiments>
</comment>
<comment type="interaction">
    <interactant intactId="EBI-603614">
        <id>Q03135</id>
    </interactant>
    <interactant intactId="EBI-716617">
        <id>Q16881</id>
        <label>TXNRD1</label>
    </interactant>
    <organismsDiffer>false</organismsDiffer>
    <experiments>4</experiments>
</comment>
<comment type="interaction">
    <interactant intactId="EBI-603614">
        <id>Q03135</id>
    </interactant>
    <interactant intactId="EBI-297549">
        <id>P52735</id>
        <label>VAV2</label>
    </interactant>
    <organismsDiffer>false</organismsDiffer>
    <experiments>2</experiments>
</comment>
<comment type="interaction">
    <interactant intactId="EBI-603614">
        <id>Q03135</id>
    </interactant>
    <interactant intactId="EBI-15875004">
        <id>P52735-1</id>
        <label>VAV2</label>
    </interactant>
    <organismsDiffer>false</organismsDiffer>
    <experiments>3</experiments>
</comment>
<comment type="interaction">
    <interactant intactId="EBI-603614">
        <id>Q03135</id>
    </interactant>
    <interactant intactId="EBI-6857773">
        <id>O70239</id>
        <label>Axin1</label>
    </interactant>
    <organismsDiffer>true</organismsDiffer>
    <experiments>5</experiments>
</comment>
<comment type="interaction">
    <interactant intactId="EBI-603614">
        <id>Q03135</id>
    </interactant>
    <interactant intactId="EBI-7100053">
        <id>Q03160</id>
        <label>Grb7</label>
    </interactant>
    <organismsDiffer>true</organismsDiffer>
    <experiments>3</experiments>
</comment>
<comment type="interaction">
    <interactant intactId="EBI-603614">
        <id>Q03135</id>
    </interactant>
    <interactant intactId="EBI-10042882">
        <id>P0DOE7</id>
        <label>M</label>
    </interactant>
    <organismsDiffer>true</organismsDiffer>
    <experiments>2</experiments>
</comment>
<comment type="interaction">
    <interactant intactId="EBI-603614">
        <id>Q03135</id>
    </interactant>
    <interactant intactId="EBI-25475868">
        <id>PRO_0000449624</id>
        <label>rep</label>
        <dbReference type="UniProtKB" id="P0DTD1"/>
    </interactant>
    <organismsDiffer>true</organismsDiffer>
    <experiments>3</experiments>
</comment>
<comment type="subcellular location">
    <subcellularLocation>
        <location>Golgi apparatus membrane</location>
        <topology>Peripheral membrane protein</topology>
    </subcellularLocation>
    <subcellularLocation>
        <location>Cell membrane</location>
        <topology>Peripheral membrane protein</topology>
    </subcellularLocation>
    <subcellularLocation>
        <location evidence="17 24">Membrane</location>
        <location evidence="17 24">Caveola</location>
        <topology>Peripheral membrane protein</topology>
    </subcellularLocation>
    <subcellularLocation>
        <location evidence="25">Membrane raft</location>
    </subcellularLocation>
    <subcellularLocation>
        <location evidence="2">Golgi apparatus</location>
        <location evidence="2">trans-Golgi network</location>
    </subcellularLocation>
    <text>Colocalized with DPP4 in membrane rafts. Potential hairpin-like structure in the membrane. Membrane protein of caveolae.</text>
</comment>
<comment type="alternative products">
    <event type="alternative initiation"/>
    <isoform>
        <id>Q03135-1</id>
        <name>1</name>
        <sequence type="displayed"/>
    </isoform>
    <isoform>
        <id>Q03135-2</id>
        <name>2</name>
        <sequence type="described" ref="VSP_018692"/>
    </isoform>
</comment>
<comment type="tissue specificity">
    <text evidence="17">Skeletal muscle, liver, stomach, lung, kidney and heart (at protein level). Expressed in the brain.</text>
</comment>
<comment type="PTM">
    <text evidence="19 21 26">Ubiquitinated. Undergo monoubiquitination and multi- and/or polyubiquitination (PubMed:21822278). Monoubiquitination of N-terminal lysines promotes integration in a ternary complex with UBXN6 and VCP which promotes oligomeric CAV1 targeting to lysosomes for degradation (PubMed:23335559). Ubiquitinated by ZNRF1; leading to degradation and modulation of the TLR4-mediated immune response (PubMed:28593998).</text>
</comment>
<comment type="PTM">
    <text evidence="11">The initiator methionine for isoform 2 is removed during or just after translation. The new N-terminal amino acid is then N-acetylated.</text>
</comment>
<comment type="PTM">
    <text evidence="10 11 27">Phosphorylated at Tyr-14 by ABL1 in response to oxidative stress.</text>
</comment>
<comment type="disease" evidence="15">
    <disease id="DI-00356">
        <name>Lipodystrophy, congenital generalized, 3</name>
        <acronym>CGL3</acronym>
        <description>A form of congenital generalized lipodystrophy, a metabolic disorder characterized by a near complete absence of adipose tissue, extreme insulin resistance, hypertriglyceridemia, hepatic steatosis and diabetes mellitus. CGL3 inheritance is autosomal recessive.</description>
        <dbReference type="MIM" id="612526"/>
    </disease>
    <text>The disease is caused by variants affecting the gene represented in this entry.</text>
</comment>
<comment type="disease" evidence="20">
    <disease id="DI-03836">
        <name>Pulmonary hypertension, primary, 3</name>
        <acronym>PPH3</acronym>
        <description>A rare disorder characterized by plexiform lesions of proliferating endothelial cells in pulmonary arterioles. The lesions lead to elevated pulmonary arterial pression, right ventricular failure, and death. The disease can occur from infancy throughout life and it has a mean age at onset of 36 years. Penetrance is reduced. Although familial pulmonary hypertension is rare, cases secondary to known etiologies are more common and include those associated with the appetite-suppressant drugs.</description>
        <dbReference type="MIM" id="615343"/>
    </disease>
    <text>The disease is caused by variants affecting the gene represented in this entry.</text>
</comment>
<comment type="disease" evidence="16">
    <disease id="DI-04108">
        <name>Lipodystrophy, familial partial, 7</name>
        <acronym>FPLD7</acronym>
        <description>A form of partial lipodystrophy, a disorder characterized by abnormal subcutaneous fat distribution. Affected individuals manifest a gradual loss of subcutaneous adipose tissue in various parts of the body, accompanied by an accumulation of adipose tissue in the face and neck in some cases causing a double chin, fat neck, or cushingoid appearance. FPLD7 is an autosomal dominant form with a variable phenotype. Some patients manifest congenital cataracts and neurodegeneration leading to cerebellar and spinal cord dysfunction.</description>
        <dbReference type="MIM" id="606721"/>
    </disease>
    <text>The disease is caused by variants affecting the gene represented in this entry.</text>
</comment>
<comment type="similarity">
    <text evidence="28">Belongs to the caveolin family.</text>
</comment>
<comment type="online information" name="Atlas of Genetics and Cytogenetics in Oncology and Haematology">
    <link uri="https://atlasgeneticsoncology.org/gene/932/CAV1"/>
</comment>
<comment type="online information" name="Wikipedia">
    <link uri="https://en.wikipedia.org/wiki/Caveolin"/>
    <text>Caveolin entry</text>
</comment>
<reference key="1">
    <citation type="journal article" date="1992" name="FEBS Lett.">
        <title>The sequence of human caveolin reveals identity with VIP21, a component of transport vesicles.</title>
        <authorList>
            <person name="Glenney J.R. Jr."/>
        </authorList>
    </citation>
    <scope>NUCLEOTIDE SEQUENCE [MRNA]</scope>
    <source>
        <tissue>Lung</tissue>
    </source>
</reference>
<reference key="2">
    <citation type="journal article" date="1999" name="Oncogene">
        <title>Analysis of the CAVEOLIN-1 gene at human chromosome 7q31.1 in primary tumours and tumour-derived cell lines.</title>
        <authorList>
            <person name="Hurlstone A.F."/>
            <person name="Reid G."/>
            <person name="Reeves J.R."/>
            <person name="Fraser J."/>
            <person name="Strathdee G."/>
            <person name="Rahilly M."/>
            <person name="Parkinson E.K."/>
            <person name="Black D.M."/>
        </authorList>
    </citation>
    <scope>NUCLEOTIDE SEQUENCE [GENOMIC DNA]</scope>
</reference>
<reference key="3">
    <citation type="journal article" date="1999" name="FEBS Lett.">
        <title>Sequence and detailed organization of the human caveolin-1 and -2 genes located near the D7S522 locus (7q31.1). Methylation of a CpG island in the 5' promoter region of the caveolin-1 gene in human breast cancer cell lines.</title>
        <authorList>
            <person name="Engelman J.A."/>
            <person name="Zhang X.L."/>
            <person name="Lisanti M.P."/>
        </authorList>
    </citation>
    <scope>NUCLEOTIDE SEQUENCE [GENOMIC DNA]</scope>
</reference>
<reference key="4">
    <citation type="submission" date="2003-05" db="EMBL/GenBank/DDBJ databases">
        <title>Cloning of human full-length CDSs in BD Creator(TM) system donor vector.</title>
        <authorList>
            <person name="Kalnine N."/>
            <person name="Chen X."/>
            <person name="Rolfs A."/>
            <person name="Halleck A."/>
            <person name="Hines L."/>
            <person name="Eisenstein S."/>
            <person name="Koundinya M."/>
            <person name="Raphael J."/>
            <person name="Moreira D."/>
            <person name="Kelley T."/>
            <person name="LaBaer J."/>
            <person name="Lin Y."/>
            <person name="Phelan M."/>
            <person name="Farmer A."/>
        </authorList>
    </citation>
    <scope>NUCLEOTIDE SEQUENCE [LARGE SCALE MRNA]</scope>
</reference>
<reference key="5">
    <citation type="journal article" date="2004" name="Genome Res.">
        <title>The status, quality, and expansion of the NIH full-length cDNA project: the Mammalian Gene Collection (MGC).</title>
        <authorList>
            <consortium name="The MGC Project Team"/>
        </authorList>
    </citation>
    <scope>NUCLEOTIDE SEQUENCE [LARGE SCALE MRNA]</scope>
    <source>
        <tissue>Brain</tissue>
        <tissue>Lung</tissue>
    </source>
</reference>
<reference key="6">
    <citation type="journal article" date="2004" name="Biochem. Biophys. Res. Commun.">
        <title>N-terminal processing and modifications of caveolin-1 in caveolae from human adipocytes.</title>
        <authorList>
            <person name="Vainonen J.P."/>
            <person name="Aboulaich N."/>
            <person name="Turkina M.V."/>
            <person name="Stralfors P."/>
            <person name="Vener A.V."/>
        </authorList>
    </citation>
    <scope>PROTEIN SEQUENCE OF 2-66</scope>
    <scope>SUBCELLULAR LOCATION</scope>
    <scope>CLEAVAGE OF INITIATOR METHIONINE</scope>
    <scope>ACETYLATION AT SER-2</scope>
    <scope>PHOSPHORYLATION AT SER-37</scope>
    <scope>CLEAVAGE OF INITIATOR METHIONINE (ISOFORM 2)</scope>
    <scope>ACETYLATION AT ALA-2 (ISOFORM 2)</scope>
    <scope>PHOSPHORYLATION AT SER-6 (ISOFORM 2)</scope>
    <source>
        <tissue>Adipose tissue</tissue>
    </source>
</reference>
<reference key="7">
    <citation type="journal article" date="2004" name="Biochem. J.">
        <title>Vectorial proteomics reveal targeting, phosphorylation and specific fragmentation of polymerase I and transcript release factor (PTRF) at the surface of caveolae in human adipocytes.</title>
        <authorList>
            <person name="Aboulaich N."/>
            <person name="Vainonen J.P."/>
            <person name="Stralfors P."/>
            <person name="Vener A.V."/>
        </authorList>
    </citation>
    <scope>PROTEIN SEQUENCE OF 58-65</scope>
    <source>
        <tissue>Adipocyte</tissue>
    </source>
</reference>
<reference key="8">
    <citation type="journal article" date="1996" name="J. Biol. Chem.">
        <title>Phosphorylation of caveolin by src tyrosine kinases. The alpha-isoform of caveolin is selectively phosphorylated by v-Src in vivo.</title>
        <authorList>
            <person name="Li S."/>
            <person name="Seitz R."/>
            <person name="Lisanti M.P."/>
        </authorList>
    </citation>
    <scope>PHOSPHORYLATION AT TYR-6; TYR-14 AND TYR-25</scope>
</reference>
<reference key="9">
    <citation type="journal article" date="2002" name="J. Biol. Chem.">
        <title>Functional interaction of caveolin-1 with Bruton's tyrosine kinase and Bmx.</title>
        <authorList>
            <person name="Vargas L."/>
            <person name="Nore B.F."/>
            <person name="Berglof A."/>
            <person name="Heinonen J.E."/>
            <person name="Mattsson P.T."/>
            <person name="Smith C.I."/>
            <person name="Mohamed A.J."/>
        </authorList>
    </citation>
    <scope>FUNCTION</scope>
    <scope>SUBCELLULAR LOCATION</scope>
    <scope>INTERACTION WITH BMX AND BTK</scope>
</reference>
<reference key="10">
    <citation type="journal article" date="2002" name="J. Cell Sci.">
        <title>Identification and characterization of a novel human plant pathogenesis-related protein that localizes to lipid-enriched microdomains in the Golgi complex.</title>
        <authorList>
            <person name="Eberle H.B."/>
            <person name="Serrano R.L."/>
            <person name="Fuellekrug J."/>
            <person name="Schlosser A."/>
            <person name="Lehmann W.D."/>
            <person name="Lottspeich F."/>
            <person name="Kaloyanova D."/>
            <person name="Wieland F.T."/>
            <person name="Helms J.B."/>
        </authorList>
    </citation>
    <scope>INTERACTION WITH GLIPR2</scope>
    <source>
        <tissue>Brain</tissue>
    </source>
</reference>
<reference key="11">
    <citation type="journal article" date="2003" name="Cell. Signal.">
        <title>c-Abl is required for oxidative stress-induced phosphorylation of caveolin-1 on tyrosine 14.</title>
        <authorList>
            <person name="Sanguinetti A.R."/>
            <person name="Mastick C.C."/>
        </authorList>
    </citation>
    <scope>PHOSPHORYLATION AT TYR-14</scope>
</reference>
<reference key="12">
    <citation type="journal article" date="2006" name="Mol. Biol. Cell">
        <title>Translocation of endothelial nitric-oxide synthase involves a ternary complex with caveolin-1 and NOSTRIN.</title>
        <authorList>
            <person name="Schilling K."/>
            <person name="Opitz N."/>
            <person name="Wiesenthal A."/>
            <person name="Oess S."/>
            <person name="Tikkanen R."/>
            <person name="Mueller-Esterl W."/>
            <person name="Icking A."/>
        </authorList>
    </citation>
    <scope>INTERACTION WITH NOSTRIN</scope>
</reference>
<reference key="13">
    <citation type="journal article" date="2006" name="J. Virol.">
        <title>The rotavirus enterotoxin NSP4 directly interacts with the caveolar structural protein caveolin-1.</title>
        <authorList>
            <person name="Parr R.D."/>
            <person name="Storey S.M."/>
            <person name="Mitchell D.M."/>
            <person name="McIntosh A.L."/>
            <person name="Zhou M."/>
            <person name="Mir K.D."/>
            <person name="Ball J.M."/>
        </authorList>
    </citation>
    <scope>INTERACTION WITH ROTAVIRUS A NSP4 (MICROBIAL INFECTION)</scope>
</reference>
<reference key="14">
    <citation type="journal article" date="2007" name="J. Biol. Chem.">
        <title>Caveolin-1 triggers T-cell activation via CD26 in association with CARMA1.</title>
        <authorList>
            <person name="Ohnuma K."/>
            <person name="Uchiyama M."/>
            <person name="Yamochi T."/>
            <person name="Nishibashi K."/>
            <person name="Hosono O."/>
            <person name="Takahashi N."/>
            <person name="Kina S."/>
            <person name="Tanaka H."/>
            <person name="Lin X."/>
            <person name="Dang N.H."/>
            <person name="Morimoto C."/>
        </authorList>
    </citation>
    <scope>FUNCTION</scope>
    <scope>INTERACTION WITH DPP4</scope>
    <scope>SUBCELLULAR LOCATION</scope>
</reference>
<reference key="15">
    <citation type="journal article" date="2008" name="J. Clin. Endocrinol. Metab.">
        <title>Association of a homozygous nonsense caveolin-1 mutation with Berardinelli-Seip congenital lipodystrophy.</title>
        <authorList>
            <person name="Kim C.A."/>
            <person name="Delepine M."/>
            <person name="Boutet E."/>
            <person name="El Mourabit H."/>
            <person name="Le Lay S."/>
            <person name="Meier M."/>
            <person name="Nemani M."/>
            <person name="Bridel E."/>
            <person name="Leite C.C."/>
            <person name="Bertola D.R."/>
            <person name="Semple R.K."/>
            <person name="O'Rahilly S."/>
            <person name="Dugail I."/>
            <person name="Capeau J."/>
            <person name="Lathrop M."/>
            <person name="Magre J."/>
        </authorList>
    </citation>
    <scope>INVOLVEMENT IN CGL3</scope>
</reference>
<reference key="16">
    <citation type="journal article" date="2008" name="Lipids Health Dis.">
        <title>Heterozygous CAV1 frameshift mutations (MIM 601047) in patients with atypical partial lipodystrophy and hypertriglyceridemia.</title>
        <authorList>
            <person name="Cao H."/>
            <person name="Alston L."/>
            <person name="Ruschman J."/>
            <person name="Hegele R.A."/>
        </authorList>
    </citation>
    <scope>INVOLVEMENT IN FPLD7</scope>
</reference>
<reference key="17">
    <citation type="journal article" date="2008" name="Proc. Natl. Acad. Sci. U.S.A.">
        <title>A quantitative atlas of mitotic phosphorylation.</title>
        <authorList>
            <person name="Dephoure N."/>
            <person name="Zhou C."/>
            <person name="Villen J."/>
            <person name="Beausoleil S.A."/>
            <person name="Bakalarski C.E."/>
            <person name="Elledge S.J."/>
            <person name="Gygi S.P."/>
        </authorList>
    </citation>
    <scope>PHOSPHORYLATION [LARGE SCALE ANALYSIS] AT SER-37</scope>
    <scope>IDENTIFICATION BY MASS SPECTROMETRY [LARGE SCALE ANALYSIS]</scope>
    <source>
        <tissue>Cervix carcinoma</tissue>
    </source>
</reference>
<reference key="18">
    <citation type="journal article" date="2009" name="EMBO J.">
        <title>SRBC/cavin-3 is a caveolin adapter protein that regulates caveolae function.</title>
        <authorList>
            <person name="McMahon K.A."/>
            <person name="Zajicek H."/>
            <person name="Li W.P."/>
            <person name="Peyton M.J."/>
            <person name="Minna J.D."/>
            <person name="Hernandez V.J."/>
            <person name="Luby-Phelps K."/>
            <person name="Anderson R.G."/>
        </authorList>
    </citation>
    <scope>FUNCTION</scope>
    <scope>SUBCELLULAR LOCATION</scope>
    <scope>TISSUE SPECIFICITY</scope>
    <scope>INTERACTION WITH CAVIN3</scope>
</reference>
<reference key="19">
    <citation type="journal article" date="2009" name="Mol. Cell. Proteomics">
        <title>Large-scale proteomics analysis of the human kinome.</title>
        <authorList>
            <person name="Oppermann F.S."/>
            <person name="Gnad F."/>
            <person name="Olsen J.V."/>
            <person name="Hornberger R."/>
            <person name="Greff Z."/>
            <person name="Keri G."/>
            <person name="Mann M."/>
            <person name="Daub H."/>
        </authorList>
    </citation>
    <scope>ACETYLATION [LARGE SCALE ANALYSIS] AT ALA-2 (ISOFORM 2)</scope>
    <scope>PHOSPHORYLATION [LARGE SCALE ANALYSIS] AT SER-6 (ISOFORM 2)</scope>
    <scope>CLEAVAGE OF INITIATOR METHIONINE [LARGE SCALE ANALYSIS] (ISOFORM 2)</scope>
    <scope>IDENTIFICATION BY MASS SPECTROMETRY [LARGE SCALE ANALYSIS]</scope>
</reference>
<reference key="20">
    <citation type="journal article" date="2009" name="Science">
        <title>Lysine acetylation targets protein complexes and co-regulates major cellular functions.</title>
        <authorList>
            <person name="Choudhary C."/>
            <person name="Kumar C."/>
            <person name="Gnad F."/>
            <person name="Nielsen M.L."/>
            <person name="Rehman M."/>
            <person name="Walther T.C."/>
            <person name="Olsen J.V."/>
            <person name="Mann M."/>
        </authorList>
    </citation>
    <scope>ACETYLATION [LARGE SCALE ANALYSIS] AT LYS-5</scope>
    <scope>IDENTIFICATION BY MASS SPECTROMETRY [LARGE SCALE ANALYSIS]</scope>
</reference>
<reference key="21">
    <citation type="journal article" date="2010" name="Sci. Signal.">
        <title>Quantitative phosphoproteomics reveals widespread full phosphorylation site occupancy during mitosis.</title>
        <authorList>
            <person name="Olsen J.V."/>
            <person name="Vermeulen M."/>
            <person name="Santamaria A."/>
            <person name="Kumar C."/>
            <person name="Miller M.L."/>
            <person name="Jensen L.J."/>
            <person name="Gnad F."/>
            <person name="Cox J."/>
            <person name="Jensen T.S."/>
            <person name="Nigg E.A."/>
            <person name="Brunak S."/>
            <person name="Mann M."/>
        </authorList>
    </citation>
    <scope>ACETYLATION [LARGE SCALE ANALYSIS] AT ALA-2 (ISOFORM 2)</scope>
    <scope>PHOSPHORYLATION [LARGE SCALE ANALYSIS] AT SER-6 (ISOFORM 2)</scope>
    <scope>CLEAVAGE OF INITIATOR METHIONINE [LARGE SCALE ANALYSIS] (ISOFORM 2)</scope>
    <scope>IDENTIFICATION BY MASS SPECTROMETRY [LARGE SCALE ANALYSIS]</scope>
    <source>
        <tissue>Cervix carcinoma</tissue>
    </source>
</reference>
<reference key="22">
    <citation type="journal article" date="2011" name="J. Cell. Mol. Med.">
        <title>Decreased caveolin-1 levels contribute to fibrosis and deposition of extracellular IGFBP-5.</title>
        <authorList>
            <person name="Yamaguchi Y."/>
            <person name="Yasuoka H."/>
            <person name="Stolz D.B."/>
            <person name="Feghali-Bostwick C.A."/>
        </authorList>
    </citation>
    <scope>INTERACTION WITH IGFBP5</scope>
</reference>
<reference key="23">
    <citation type="journal article" date="2011" name="BMC Syst. Biol.">
        <title>Initial characterization of the human central proteome.</title>
        <authorList>
            <person name="Burkard T.R."/>
            <person name="Planyavsky M."/>
            <person name="Kaupe I."/>
            <person name="Breitwieser F.P."/>
            <person name="Buerckstuemmer T."/>
            <person name="Bennett K.L."/>
            <person name="Superti-Furga G."/>
            <person name="Colinge J."/>
        </authorList>
    </citation>
    <scope>IDENTIFICATION BY MASS SPECTROMETRY [LARGE SCALE ANALYSIS]</scope>
</reference>
<reference key="24">
    <citation type="journal article" date="2011" name="Sci. Signal.">
        <title>System-wide temporal characterization of the proteome and phosphoproteome of human embryonic stem cell differentiation.</title>
        <authorList>
            <person name="Rigbolt K.T."/>
            <person name="Prokhorova T.A."/>
            <person name="Akimov V."/>
            <person name="Henningsen J."/>
            <person name="Johansen P.T."/>
            <person name="Kratchmarova I."/>
            <person name="Kassem M."/>
            <person name="Mann M."/>
            <person name="Olsen J.V."/>
            <person name="Blagoev B."/>
        </authorList>
    </citation>
    <scope>PHOSPHORYLATION [LARGE SCALE ANALYSIS] AT SER-37</scope>
    <scope>IDENTIFICATION BY MASS SPECTROMETRY [LARGE SCALE ANALYSIS]</scope>
</reference>
<reference key="25">
    <citation type="journal article" date="2012" name="Circ. Cardiovasc. Genet.">
        <title>Whole exome sequencing to identify a novel gene (caveolin-1) associated with human pulmonary arterial hypertension.</title>
        <authorList>
            <person name="Austin E.D."/>
            <person name="Ma L."/>
            <person name="LeDuc C."/>
            <person name="Berman Rosenzweig E."/>
            <person name="Borczuk A."/>
            <person name="Phillips J.A. III"/>
            <person name="Palomero T."/>
            <person name="Sumazin P."/>
            <person name="Kim H.R."/>
            <person name="Talati M.H."/>
            <person name="West J."/>
            <person name="Loyd J.E."/>
            <person name="Chung W.K."/>
        </authorList>
    </citation>
    <scope>INVOLVEMENT IN PPH3</scope>
</reference>
<reference key="26">
    <citation type="journal article" date="2012" name="Proc. Natl. Acad. Sci. U.S.A.">
        <title>N-terminal acetylome analyses and functional insights of the N-terminal acetyltransferase NatB.</title>
        <authorList>
            <person name="Van Damme P."/>
            <person name="Lasa M."/>
            <person name="Polevoda B."/>
            <person name="Gazquez C."/>
            <person name="Elosegui-Artola A."/>
            <person name="Kim D.S."/>
            <person name="De Juan-Pardo E."/>
            <person name="Demeyer K."/>
            <person name="Hole K."/>
            <person name="Larrea E."/>
            <person name="Timmerman E."/>
            <person name="Prieto J."/>
            <person name="Arnesen T."/>
            <person name="Sherman F."/>
            <person name="Gevaert K."/>
            <person name="Aldabe R."/>
        </authorList>
    </citation>
    <scope>ACETYLATION [LARGE SCALE ANALYSIS] AT SER-2</scope>
    <scope>ACETYLATION [LARGE SCALE ANALYSIS] AT ALA-2 (ISOFORM 2)</scope>
    <scope>CLEAVAGE OF INITIATOR METHIONINE [LARGE SCALE ANALYSIS]</scope>
    <scope>CLEAVAGE OF INITIATOR METHIONINE [LARGE SCALE ANALYSIS] (ISOFORM 2)</scope>
    <scope>IDENTIFICATION BY MASS SPECTROMETRY [LARGE SCALE ANALYSIS]</scope>
</reference>
<reference key="27">
    <citation type="journal article" date="2013" name="J. Proteome Res.">
        <title>Toward a comprehensive characterization of a human cancer cell phosphoproteome.</title>
        <authorList>
            <person name="Zhou H."/>
            <person name="Di Palma S."/>
            <person name="Preisinger C."/>
            <person name="Peng M."/>
            <person name="Polat A.N."/>
            <person name="Heck A.J."/>
            <person name="Mohammed S."/>
        </authorList>
    </citation>
    <scope>PHOSPHORYLATION [LARGE SCALE ANALYSIS] AT SER-37</scope>
    <scope>IDENTIFICATION BY MASS SPECTROMETRY [LARGE SCALE ANALYSIS]</scope>
    <source>
        <tissue>Cervix carcinoma</tissue>
    </source>
</reference>
<reference key="28">
    <citation type="journal article" date="2014" name="Biochim. Biophys. Acta">
        <title>Caveolin-1 interacts with ATP binding cassette transporter G1 (ABCG1) and regulates ABCG1-mediated cholesterol efflux.</title>
        <authorList>
            <person name="Gu H.M."/>
            <person name="Wang F.Q."/>
            <person name="Zhang D.W."/>
        </authorList>
    </citation>
    <scope>INTERACTION WITH ABCG1</scope>
</reference>
<reference key="29">
    <citation type="journal article" date="2014" name="J. Proteomics">
        <title>An enzyme assisted RP-RPLC approach for in-depth analysis of human liver phosphoproteome.</title>
        <authorList>
            <person name="Bian Y."/>
            <person name="Song C."/>
            <person name="Cheng K."/>
            <person name="Dong M."/>
            <person name="Wang F."/>
            <person name="Huang J."/>
            <person name="Sun D."/>
            <person name="Wang L."/>
            <person name="Ye M."/>
            <person name="Zou H."/>
        </authorList>
    </citation>
    <scope>PHOSPHORYLATION [LARGE SCALE ANALYSIS] AT SER-37</scope>
    <scope>IDENTIFICATION BY MASS SPECTROMETRY [LARGE SCALE ANALYSIS]</scope>
    <source>
        <tissue>Liver</tissue>
    </source>
</reference>
<reference key="30">
    <citation type="journal article" date="2015" name="J. Cell Sci.">
        <title>Cavin3 interacts with cavin1 and caveolin1 to increase surface dynamics of caveolae.</title>
        <authorList>
            <person name="Mohan J."/>
            <person name="Moren B."/>
            <person name="Larsson E."/>
            <person name="Holst M.R."/>
            <person name="Lundmark R."/>
        </authorList>
    </citation>
    <scope>INTERACTION WITH CAVIN1; CAVIN3 AND EHD2</scope>
    <scope>SUBCELLULAR LOCATION</scope>
    <scope>SUBUNIT</scope>
</reference>
<reference key="31">
    <citation type="journal article" date="2016" name="Oncogene">
        <title>Syntenin regulates TGF-beta1-induced Smad activation and the epithelial-to-mesenchymal transition by inhibiting caveolin-mediated TGF-beta type I receptor internalization.</title>
        <authorList>
            <person name="Hwangbo C."/>
            <person name="Tae N."/>
            <person name="Lee S."/>
            <person name="Kim O."/>
            <person name="Park O.K."/>
            <person name="Kim J."/>
            <person name="Kwon S.H."/>
            <person name="Lee J.H."/>
        </authorList>
    </citation>
    <scope>FUNCTION</scope>
    <scope>SUBCELLULAR LOCATION</scope>
    <scope>INTERACTION WITH TGFBR1</scope>
</reference>
<reference key="32">
    <citation type="journal article" date="2017" name="Nat. Commun.">
        <title>The ubiquitin ligase ZNRF1 promotes caveolin-1 ubiquitination and degradation to modulate inflammation.</title>
        <authorList>
            <person name="Lee C.Y."/>
            <person name="Lai T.Y."/>
            <person name="Tsai M.K."/>
            <person name="Chang Y.C."/>
            <person name="Ho Y.H."/>
            <person name="Yu I.S."/>
            <person name="Yeh T.W."/>
            <person name="Chou C.C."/>
            <person name="Lin Y.S."/>
            <person name="Lawrence T."/>
            <person name="Hsu L.C."/>
        </authorList>
    </citation>
    <scope>UBIQIUITNATION BY ZNRF1</scope>
    <scope>MUTAGENESIS OF LYS-39</scope>
</reference>
<reference key="33">
    <citation type="journal article" date="2002" name="Am. J. Pathol.">
        <title>Caveolin-1 mutations (P132L and null) and the pathogenesis of breast cancer: caveolin-1 (P132L) behaves in a dominant-negative manner and caveolin-1 (-/-) null mice show mammary epithelial cell hyperplasia.</title>
        <authorList>
            <person name="Lee H."/>
            <person name="Park D.S."/>
            <person name="Razani B."/>
            <person name="Russell R.G."/>
            <person name="Pestell R.G."/>
            <person name="Lisanti M.P."/>
        </authorList>
    </citation>
    <scope>VARIANT LEU-132</scope>
    <scope>CHARACTERIZATION OF VARIANT LEU-132</scope>
</reference>
<reference key="34">
    <citation type="journal article" date="2011" name="Nat. Cell Biol.">
        <title>Endolysosomal sorting of ubiquitylated caveolin-1 is regulated by VCP and UBXD1 and impaired by VCP disease mutations.</title>
        <authorList>
            <person name="Ritz D."/>
            <person name="Vuk M."/>
            <person name="Kirchner P."/>
            <person name="Bug M."/>
            <person name="Schuetz S."/>
            <person name="Hayer A."/>
            <person name="Bremer S."/>
            <person name="Lusk C."/>
            <person name="Baloh R.H."/>
            <person name="Lee H."/>
            <person name="Glatter T."/>
            <person name="Gstaiger M."/>
            <person name="Aebersold R."/>
            <person name="Weihl C.C."/>
            <person name="Meyer H."/>
        </authorList>
    </citation>
    <scope>INTERACTION WITH VCP AND UBXN6</scope>
    <scope>UBIQUITINATION</scope>
    <scope>CHARACTERIZATION OF VARIANT LEU-132</scope>
</reference>
<reference key="35">
    <citation type="journal article" date="2013" name="J. Biol. Chem.">
        <title>Ubiquitination of the N-terminal region of caveolin-1 regulates endosomal sorting by the VCP/p97 AAA-ATPase.</title>
        <authorList>
            <person name="Kirchner P."/>
            <person name="Bug M."/>
            <person name="Meyer H."/>
        </authorList>
    </citation>
    <scope>INTERACTION WITH VCP AND UBXN6</scope>
    <scope>UBIQUITINATION AT LYS-5; LYS-26; LYS-30; LYS-39; LYS-47 AND LYS-57</scope>
</reference>
<reference key="36">
    <citation type="journal article" date="2015" name="Mol. Cell. Proteomics">
        <title>New host factors important for respiratory syncytial virus (RSV) replication revealed by a novel microfluidics screen for interactors of matrix (M) protein.</title>
        <authorList>
            <person name="Kipper S."/>
            <person name="Hamad S."/>
            <person name="Caly L."/>
            <person name="Avrahami D."/>
            <person name="Bacharach E."/>
            <person name="Jans D.A."/>
            <person name="Gerber D."/>
            <person name="Bajorek M."/>
        </authorList>
    </citation>
    <scope>INTERACTION WITH HRSV MATRIX PROTEIN (MICROBIAL INFECTION)</scope>
</reference>
<feature type="initiator methionine" description="Removed" evidence="11 34">
    <location>
        <position position="1"/>
    </location>
</feature>
<feature type="chain" id="PRO_0000004764" description="Caveolin-1">
    <location>
        <begin position="2"/>
        <end position="178"/>
    </location>
</feature>
<feature type="topological domain" description="Cytoplasmic" evidence="6">
    <location>
        <begin position="2"/>
        <end position="104"/>
    </location>
</feature>
<feature type="intramembrane region" description="Helical" evidence="6">
    <location>
        <begin position="105"/>
        <end position="125"/>
    </location>
</feature>
<feature type="topological domain" description="Cytoplasmic" evidence="6">
    <location>
        <begin position="126"/>
        <end position="178"/>
    </location>
</feature>
<feature type="region of interest" description="Required for homooligomerization" evidence="24">
    <location>
        <begin position="2"/>
        <end position="94"/>
    </location>
</feature>
<feature type="region of interest" description="Interaction with CAVIN3" evidence="24">
    <location>
        <begin position="82"/>
        <end position="94"/>
    </location>
</feature>
<feature type="region of interest" description="Interacts with SPRY1, SPRY2, SPRY3 and SPRY4" evidence="4">
    <location>
        <begin position="131"/>
        <end position="142"/>
    </location>
</feature>
<feature type="region of interest" description="Interacts with SPRY1, SPRY2, and SPRY4" evidence="4">
    <location>
        <begin position="149"/>
        <end position="160"/>
    </location>
</feature>
<feature type="region of interest" description="Interacts with SPRY1, SPRY2, SPRY3 and SPRY4" evidence="4">
    <location>
        <begin position="167"/>
        <end position="178"/>
    </location>
</feature>
<feature type="modified residue" description="N-acetylserine" evidence="11 34">
    <location>
        <position position="2"/>
    </location>
</feature>
<feature type="modified residue" description="Phosphoserine" evidence="3">
    <location>
        <position position="2"/>
    </location>
</feature>
<feature type="modified residue" description="N6-acetyllysine; alternate" evidence="31">
    <location>
        <position position="5"/>
    </location>
</feature>
<feature type="modified residue" description="Phosphotyrosine" evidence="27">
    <location>
        <position position="6"/>
    </location>
</feature>
<feature type="modified residue" description="Phosphoserine" evidence="4">
    <location>
        <position position="9"/>
    </location>
</feature>
<feature type="modified residue" description="Phosphotyrosine; by ABL1" evidence="10 27">
    <location>
        <position position="14"/>
    </location>
</feature>
<feature type="modified residue" description="Phosphotyrosine" evidence="27">
    <location>
        <position position="25"/>
    </location>
</feature>
<feature type="modified residue" description="Phosphoserine" evidence="11 29 33 35 36">
    <location>
        <position position="37"/>
    </location>
</feature>
<feature type="lipid moiety-binding region" description="S-palmitoyl cysteine" evidence="1">
    <location>
        <position position="133"/>
    </location>
</feature>
<feature type="lipid moiety-binding region" description="S-palmitoyl cysteine" evidence="1">
    <location>
        <position position="143"/>
    </location>
</feature>
<feature type="lipid moiety-binding region" description="S-palmitoyl cysteine" evidence="1">
    <location>
        <position position="156"/>
    </location>
</feature>
<feature type="cross-link" description="Glycyl lysine isopeptide (Lys-Gly) (interchain with G-Cter in ubiquitin); alternate" evidence="21">
    <location>
        <position position="5"/>
    </location>
</feature>
<feature type="cross-link" description="Glycyl lysine isopeptide (Lys-Gly) (interchain with G-Cter in ubiquitin)" evidence="21">
    <location>
        <position position="26"/>
    </location>
</feature>
<feature type="cross-link" description="Glycyl lysine isopeptide (Lys-Gly) (interchain with G-Cter in ubiquitin)" evidence="21">
    <location>
        <position position="30"/>
    </location>
</feature>
<feature type="cross-link" description="Glycyl lysine isopeptide (Lys-Gly) (interchain with G-Cter in ubiquitin)" evidence="21 26">
    <location>
        <position position="39"/>
    </location>
</feature>
<feature type="cross-link" description="Glycyl lysine isopeptide (Lys-Gly) (interchain with G-Cter in ubiquitin)" evidence="21">
    <location>
        <position position="47"/>
    </location>
</feature>
<feature type="cross-link" description="Glycyl lysine isopeptide (Lys-Gly) (interchain with G-Cter in ubiquitin)" evidence="21">
    <location>
        <position position="57"/>
    </location>
</feature>
<feature type="splice variant" id="VSP_018692" description="In isoform 2." evidence="28">
    <location>
        <begin position="1"/>
        <end position="31"/>
    </location>
</feature>
<feature type="sequence variant" id="VAR_015103" description="In breast cancer; seems to form misfolded oligomers that are retained within the Golgi complex and are not targeted to caveolae or the plasma membrane; loss of interaction with VCP; dbSNP:rs1213469537." evidence="9 19">
    <original>P</original>
    <variation>L</variation>
    <location>
        <position position="132"/>
    </location>
</feature>
<feature type="mutagenesis site" description="Resistance to ZNRF1-mediated degradation." evidence="26">
    <original>K</original>
    <variation>R</variation>
    <location>
        <position position="39"/>
    </location>
</feature>
<feature type="sequence conflict" description="In Ref. 1; CAA79476." evidence="28" ref="1">
    <original>D</original>
    <variation>H</variation>
    <location>
        <position position="82"/>
    </location>
</feature>
<feature type="sequence conflict" description="In Ref. 1; CAA79476." evidence="28" ref="1">
    <original>I</original>
    <variation>T</variation>
    <location>
        <position position="144"/>
    </location>
</feature>
<feature type="strand" evidence="37">
    <location>
        <begin position="62"/>
        <end position="64"/>
    </location>
</feature>
<feature type="helix" evidence="37">
    <location>
        <begin position="68"/>
        <end position="70"/>
    </location>
</feature>
<feature type="helix" evidence="37">
    <location>
        <begin position="82"/>
        <end position="106"/>
    </location>
</feature>
<feature type="helix" evidence="37">
    <location>
        <begin position="109"/>
        <end position="128"/>
    </location>
</feature>
<feature type="helix" evidence="37">
    <location>
        <begin position="130"/>
        <end position="140"/>
    </location>
</feature>
<feature type="helix" evidence="37">
    <location>
        <begin position="143"/>
        <end position="155"/>
    </location>
</feature>
<feature type="helix" evidence="37">
    <location>
        <begin position="159"/>
        <end position="162"/>
    </location>
</feature>
<feature type="helix" evidence="37">
    <location>
        <begin position="163"/>
        <end position="167"/>
    </location>
</feature>
<feature type="strand" evidence="37">
    <location>
        <begin position="170"/>
        <end position="176"/>
    </location>
</feature>
<feature type="initiator methionine" description="Removed" evidence="11 30 32 34">
    <location sequence="Q03135-2">
        <position position="1"/>
    </location>
</feature>
<feature type="modified residue" description="N-acetylalanine" evidence="11 30 32 34">
    <location sequence="Q03135-2">
        <position position="2"/>
    </location>
</feature>
<feature type="modified residue" description="Phosphoserine" evidence="11 30 32">
    <location sequence="Q03135-2">
        <position position="6"/>
    </location>
</feature>
<gene>
    <name type="primary">CAV1</name>
    <name type="synonym">CAV</name>
</gene>
<organism>
    <name type="scientific">Homo sapiens</name>
    <name type="common">Human</name>
    <dbReference type="NCBI Taxonomy" id="9606"/>
    <lineage>
        <taxon>Eukaryota</taxon>
        <taxon>Metazoa</taxon>
        <taxon>Chordata</taxon>
        <taxon>Craniata</taxon>
        <taxon>Vertebrata</taxon>
        <taxon>Euteleostomi</taxon>
        <taxon>Mammalia</taxon>
        <taxon>Eutheria</taxon>
        <taxon>Euarchontoglires</taxon>
        <taxon>Primates</taxon>
        <taxon>Haplorrhini</taxon>
        <taxon>Catarrhini</taxon>
        <taxon>Hominidae</taxon>
        <taxon>Homo</taxon>
    </lineage>
</organism>
<protein>
    <recommendedName>
        <fullName>Caveolin-1</fullName>
    </recommendedName>
</protein>
<dbReference type="EMBL" id="Z18951">
    <property type="protein sequence ID" value="CAA79476.1"/>
    <property type="molecule type" value="mRNA"/>
</dbReference>
<dbReference type="EMBL" id="AF095593">
    <property type="protein sequence ID" value="AAD23745.1"/>
    <property type="molecule type" value="Genomic_DNA"/>
</dbReference>
<dbReference type="EMBL" id="AF095591">
    <property type="protein sequence ID" value="AAD23745.1"/>
    <property type="status" value="JOINED"/>
    <property type="molecule type" value="Genomic_DNA"/>
</dbReference>
<dbReference type="EMBL" id="AF095592">
    <property type="protein sequence ID" value="AAD23745.1"/>
    <property type="status" value="JOINED"/>
    <property type="molecule type" value="Genomic_DNA"/>
</dbReference>
<dbReference type="EMBL" id="AJ133269">
    <property type="protein sequence ID" value="CAB63654.1"/>
    <property type="molecule type" value="Genomic_DNA"/>
</dbReference>
<dbReference type="EMBL" id="AF125348">
    <property type="protein sequence ID" value="AAD34722.1"/>
    <property type="molecule type" value="Genomic_DNA"/>
</dbReference>
<dbReference type="EMBL" id="BT007143">
    <property type="protein sequence ID" value="AAP35807.1"/>
    <property type="molecule type" value="mRNA"/>
</dbReference>
<dbReference type="EMBL" id="BC009685">
    <property type="protein sequence ID" value="AAH09685.1"/>
    <property type="molecule type" value="mRNA"/>
</dbReference>
<dbReference type="EMBL" id="BC082246">
    <property type="protein sequence ID" value="AAH82246.1"/>
    <property type="molecule type" value="mRNA"/>
</dbReference>
<dbReference type="CCDS" id="CCDS55156.1">
    <molecule id="Q03135-2"/>
</dbReference>
<dbReference type="CCDS" id="CCDS5767.1">
    <molecule id="Q03135-1"/>
</dbReference>
<dbReference type="PIR" id="S26884">
    <property type="entry name" value="S26884"/>
</dbReference>
<dbReference type="RefSeq" id="NP_001166366.1">
    <molecule id="Q03135-2"/>
    <property type="nucleotide sequence ID" value="NM_001172895.1"/>
</dbReference>
<dbReference type="RefSeq" id="NP_001166367.1">
    <molecule id="Q03135-2"/>
    <property type="nucleotide sequence ID" value="NM_001172896.2"/>
</dbReference>
<dbReference type="RefSeq" id="NP_001166368.1">
    <molecule id="Q03135-2"/>
    <property type="nucleotide sequence ID" value="NM_001172897.2"/>
</dbReference>
<dbReference type="RefSeq" id="NP_001744.2">
    <molecule id="Q03135-1"/>
    <property type="nucleotide sequence ID" value="NM_001753.4"/>
</dbReference>
<dbReference type="PDB" id="7SC0">
    <property type="method" value="EM"/>
    <property type="resolution" value="3.40 A"/>
    <property type="chains" value="A/B/C/D/E/F/G/H/I/J/K=1-178"/>
</dbReference>
<dbReference type="PDBsum" id="7SC0"/>
<dbReference type="EMDB" id="EMD-25007"/>
<dbReference type="SMR" id="Q03135"/>
<dbReference type="BioGRID" id="107305">
    <property type="interactions" value="738"/>
</dbReference>
<dbReference type="CORUM" id="Q03135"/>
<dbReference type="DIP" id="DIP-5960N"/>
<dbReference type="FunCoup" id="Q03135">
    <property type="interactions" value="1915"/>
</dbReference>
<dbReference type="IntAct" id="Q03135">
    <property type="interactions" value="208"/>
</dbReference>
<dbReference type="MINT" id="Q03135"/>
<dbReference type="STRING" id="9606.ENSP00000339191"/>
<dbReference type="BindingDB" id="Q03135"/>
<dbReference type="ChEMBL" id="CHEMBL3808270"/>
<dbReference type="TCDB" id="8.A.26.1.1">
    <property type="family name" value="the caveolin (caveolin) family"/>
</dbReference>
<dbReference type="GlyGen" id="Q03135">
    <property type="glycosylation" value="1 site, 1 O-linked glycan (1 site)"/>
</dbReference>
<dbReference type="iPTMnet" id="Q03135"/>
<dbReference type="MetOSite" id="Q03135"/>
<dbReference type="PhosphoSitePlus" id="Q03135"/>
<dbReference type="SwissPalm" id="Q03135"/>
<dbReference type="BioMuta" id="CAV1"/>
<dbReference type="DMDM" id="13637934"/>
<dbReference type="jPOST" id="Q03135"/>
<dbReference type="MassIVE" id="Q03135"/>
<dbReference type="PaxDb" id="9606-ENSP00000339191"/>
<dbReference type="PeptideAtlas" id="Q03135"/>
<dbReference type="ProteomicsDB" id="58192">
    <molecule id="Q03135-1"/>
</dbReference>
<dbReference type="ProteomicsDB" id="58193">
    <molecule id="Q03135-2"/>
</dbReference>
<dbReference type="Pumba" id="Q03135"/>
<dbReference type="TopDownProteomics" id="Q03135-1">
    <molecule id="Q03135-1"/>
</dbReference>
<dbReference type="TopDownProteomics" id="Q03135-2">
    <molecule id="Q03135-2"/>
</dbReference>
<dbReference type="ABCD" id="Q03135">
    <property type="antibodies" value="3 sequenced antibodies"/>
</dbReference>
<dbReference type="Antibodypedia" id="3530">
    <property type="antibodies" value="1220 antibodies from 47 providers"/>
</dbReference>
<dbReference type="DNASU" id="857"/>
<dbReference type="Ensembl" id="ENST00000341049.7">
    <molecule id="Q03135-1"/>
    <property type="protein sequence ID" value="ENSP00000339191.2"/>
    <property type="gene ID" value="ENSG00000105974.13"/>
</dbReference>
<dbReference type="Ensembl" id="ENST00000393467.1">
    <molecule id="Q03135-2"/>
    <property type="protein sequence ID" value="ENSP00000377110.1"/>
    <property type="gene ID" value="ENSG00000105974.13"/>
</dbReference>
<dbReference type="Ensembl" id="ENST00000393468.1">
    <molecule id="Q03135-2"/>
    <property type="protein sequence ID" value="ENSP00000377111.1"/>
    <property type="gene ID" value="ENSG00000105974.13"/>
</dbReference>
<dbReference type="Ensembl" id="ENST00000405348.6">
    <molecule id="Q03135-2"/>
    <property type="protein sequence ID" value="ENSP00000384348.1"/>
    <property type="gene ID" value="ENSG00000105974.13"/>
</dbReference>
<dbReference type="GeneID" id="857"/>
<dbReference type="KEGG" id="hsa:857"/>
<dbReference type="MANE-Select" id="ENST00000341049.7">
    <property type="protein sequence ID" value="ENSP00000339191.2"/>
    <property type="RefSeq nucleotide sequence ID" value="NM_001753.5"/>
    <property type="RefSeq protein sequence ID" value="NP_001744.2"/>
</dbReference>
<dbReference type="UCSC" id="uc003vig.3">
    <molecule id="Q03135-1"/>
    <property type="organism name" value="human"/>
</dbReference>
<dbReference type="AGR" id="HGNC:1527"/>
<dbReference type="CTD" id="857"/>
<dbReference type="DisGeNET" id="857"/>
<dbReference type="GeneCards" id="CAV1"/>
<dbReference type="GeneReviews" id="CAV1"/>
<dbReference type="HGNC" id="HGNC:1527">
    <property type="gene designation" value="CAV1"/>
</dbReference>
<dbReference type="HPA" id="ENSG00000105974">
    <property type="expression patterns" value="Low tissue specificity"/>
</dbReference>
<dbReference type="MalaCards" id="CAV1"/>
<dbReference type="MIM" id="601047">
    <property type="type" value="gene"/>
</dbReference>
<dbReference type="MIM" id="606721">
    <property type="type" value="phenotype"/>
</dbReference>
<dbReference type="MIM" id="612526">
    <property type="type" value="phenotype"/>
</dbReference>
<dbReference type="MIM" id="615343">
    <property type="type" value="phenotype"/>
</dbReference>
<dbReference type="neXtProt" id="NX_Q03135"/>
<dbReference type="OpenTargets" id="ENSG00000105974"/>
<dbReference type="Orphanet" id="528">
    <property type="disease" value="Congenital generalized lipodystrophy"/>
</dbReference>
<dbReference type="Orphanet" id="220393">
    <property type="disease" value="Diffuse cutaneous systemic sclerosis"/>
</dbReference>
<dbReference type="Orphanet" id="275777">
    <property type="disease" value="Heritable pulmonary arterial hypertension"/>
</dbReference>
<dbReference type="Orphanet" id="220402">
    <property type="disease" value="Limited cutaneous systemic sclerosis"/>
</dbReference>
<dbReference type="PharmGKB" id="PA26107"/>
<dbReference type="VEuPathDB" id="HostDB:ENSG00000105974"/>
<dbReference type="eggNOG" id="ENOG502QUK5">
    <property type="taxonomic scope" value="Eukaryota"/>
</dbReference>
<dbReference type="GeneTree" id="ENSGT00950000183006"/>
<dbReference type="InParanoid" id="Q03135"/>
<dbReference type="OMA" id="MSGSKYV"/>
<dbReference type="OrthoDB" id="5917823at2759"/>
<dbReference type="PAN-GO" id="Q03135">
    <property type="GO annotations" value="14 GO annotations based on evolutionary models"/>
</dbReference>
<dbReference type="PhylomeDB" id="Q03135"/>
<dbReference type="TreeFam" id="TF315736"/>
<dbReference type="PathwayCommons" id="Q03135"/>
<dbReference type="Reactome" id="R-HSA-163560">
    <property type="pathway name" value="Triglyceride catabolism"/>
</dbReference>
<dbReference type="Reactome" id="R-HSA-203615">
    <property type="pathway name" value="eNOS activation"/>
</dbReference>
<dbReference type="Reactome" id="R-HSA-203641">
    <property type="pathway name" value="NOSTRIN mediated eNOS trafficking"/>
</dbReference>
<dbReference type="Reactome" id="R-HSA-210991">
    <property type="pathway name" value="Basigin interactions"/>
</dbReference>
<dbReference type="Reactome" id="R-HSA-4641262">
    <property type="pathway name" value="Disassembly of the destruction complex and recruitment of AXIN to the membrane"/>
</dbReference>
<dbReference type="Reactome" id="R-HSA-5218920">
    <property type="pathway name" value="VEGFR2 mediated vascular permeability"/>
</dbReference>
<dbReference type="Reactome" id="R-HSA-8980692">
    <property type="pathway name" value="RHOA GTPase cycle"/>
</dbReference>
<dbReference type="Reactome" id="R-HSA-9009391">
    <property type="pathway name" value="Extra-nuclear estrogen signaling"/>
</dbReference>
<dbReference type="Reactome" id="R-HSA-9013026">
    <property type="pathway name" value="RHOB GTPase cycle"/>
</dbReference>
<dbReference type="Reactome" id="R-HSA-9013106">
    <property type="pathway name" value="RHOC GTPase cycle"/>
</dbReference>
<dbReference type="Reactome" id="R-HSA-9013148">
    <property type="pathway name" value="CDC42 GTPase cycle"/>
</dbReference>
<dbReference type="Reactome" id="R-HSA-9013149">
    <property type="pathway name" value="RAC1 GTPase cycle"/>
</dbReference>
<dbReference type="Reactome" id="R-HSA-9013404">
    <property type="pathway name" value="RAC2 GTPase cycle"/>
</dbReference>
<dbReference type="Reactome" id="R-HSA-9013405">
    <property type="pathway name" value="RHOD GTPase cycle"/>
</dbReference>
<dbReference type="Reactome" id="R-HSA-9013406">
    <property type="pathway name" value="RHOQ GTPase cycle"/>
</dbReference>
<dbReference type="Reactome" id="R-HSA-9013407">
    <property type="pathway name" value="RHOH GTPase cycle"/>
</dbReference>
<dbReference type="Reactome" id="R-HSA-9013408">
    <property type="pathway name" value="RHOG GTPase cycle"/>
</dbReference>
<dbReference type="Reactome" id="R-HSA-9013409">
    <property type="pathway name" value="RHOJ GTPase cycle"/>
</dbReference>
<dbReference type="Reactome" id="R-HSA-9013423">
    <property type="pathway name" value="RAC3 GTPase cycle"/>
</dbReference>
<dbReference type="Reactome" id="R-HSA-9035034">
    <property type="pathway name" value="RHOF GTPase cycle"/>
</dbReference>
<dbReference type="Reactome" id="R-HSA-9617828">
    <property type="pathway name" value="FOXO-mediated transcription of cell cycle genes"/>
</dbReference>
<dbReference type="Reactome" id="R-HSA-9696264">
    <property type="pathway name" value="RND3 GTPase cycle"/>
</dbReference>
<dbReference type="Reactome" id="R-HSA-9696270">
    <property type="pathway name" value="RND2 GTPase cycle"/>
</dbReference>
<dbReference type="Reactome" id="R-HSA-9696273">
    <property type="pathway name" value="RND1 GTPase cycle"/>
</dbReference>
<dbReference type="Reactome" id="R-HSA-9735871">
    <property type="pathway name" value="SARS-CoV-1 targets host intracellular signalling and regulatory pathways"/>
</dbReference>
<dbReference type="Reactome" id="R-HSA-9755779">
    <property type="pathway name" value="SARS-CoV-2 targets host intracellular signalling and regulatory pathways"/>
</dbReference>
<dbReference type="SignaLink" id="Q03135"/>
<dbReference type="SIGNOR" id="Q03135"/>
<dbReference type="BioGRID-ORCS" id="857">
    <property type="hits" value="19 hits in 1167 CRISPR screens"/>
</dbReference>
<dbReference type="CD-CODE" id="86739B61">
    <property type="entry name" value="Synthetic Condensate 000279"/>
</dbReference>
<dbReference type="ChiTaRS" id="CAV1">
    <property type="organism name" value="human"/>
</dbReference>
<dbReference type="GeneWiki" id="Caveolin_1"/>
<dbReference type="GenomeRNAi" id="857"/>
<dbReference type="Pharos" id="Q03135">
    <property type="development level" value="Tbio"/>
</dbReference>
<dbReference type="PRO" id="PR:Q03135"/>
<dbReference type="Proteomes" id="UP000005640">
    <property type="component" value="Chromosome 7"/>
</dbReference>
<dbReference type="RNAct" id="Q03135">
    <property type="molecule type" value="protein"/>
</dbReference>
<dbReference type="Bgee" id="ENSG00000105974">
    <property type="expression patterns" value="Expressed in lower lobe of lung and 208 other cell types or tissues"/>
</dbReference>
<dbReference type="ExpressionAtlas" id="Q03135">
    <property type="expression patterns" value="baseline and differential"/>
</dbReference>
<dbReference type="GO" id="GO:0002080">
    <property type="term" value="C:acrosomal membrane"/>
    <property type="evidence" value="ECO:0007669"/>
    <property type="project" value="Ensembl"/>
</dbReference>
<dbReference type="GO" id="GO:0016324">
    <property type="term" value="C:apical plasma membrane"/>
    <property type="evidence" value="ECO:0000314"/>
    <property type="project" value="BHF-UCL"/>
</dbReference>
<dbReference type="GO" id="GO:0016323">
    <property type="term" value="C:basolateral plasma membrane"/>
    <property type="evidence" value="ECO:0000314"/>
    <property type="project" value="BHF-UCL"/>
</dbReference>
<dbReference type="GO" id="GO:0005901">
    <property type="term" value="C:caveola"/>
    <property type="evidence" value="ECO:0000314"/>
    <property type="project" value="UniProtKB"/>
</dbReference>
<dbReference type="GO" id="GO:0002095">
    <property type="term" value="C:caveolar macromolecular signaling complex"/>
    <property type="evidence" value="ECO:0007669"/>
    <property type="project" value="Ensembl"/>
</dbReference>
<dbReference type="GO" id="GO:0005938">
    <property type="term" value="C:cell cortex"/>
    <property type="evidence" value="ECO:0007669"/>
    <property type="project" value="Ensembl"/>
</dbReference>
<dbReference type="GO" id="GO:0005929">
    <property type="term" value="C:cilium"/>
    <property type="evidence" value="ECO:0007669"/>
    <property type="project" value="Ensembl"/>
</dbReference>
<dbReference type="GO" id="GO:0031410">
    <property type="term" value="C:cytoplasmic vesicle"/>
    <property type="evidence" value="ECO:0000314"/>
    <property type="project" value="UniProtKB"/>
</dbReference>
<dbReference type="GO" id="GO:0031901">
    <property type="term" value="C:early endosome membrane"/>
    <property type="evidence" value="ECO:0000304"/>
    <property type="project" value="Reactome"/>
</dbReference>
<dbReference type="GO" id="GO:0030666">
    <property type="term" value="C:endocytic vesicle membrane"/>
    <property type="evidence" value="ECO:0000304"/>
    <property type="project" value="Reactome"/>
</dbReference>
<dbReference type="GO" id="GO:0005783">
    <property type="term" value="C:endoplasmic reticulum"/>
    <property type="evidence" value="ECO:0000314"/>
    <property type="project" value="HGNC-UCL"/>
</dbReference>
<dbReference type="GO" id="GO:0005789">
    <property type="term" value="C:endoplasmic reticulum membrane"/>
    <property type="evidence" value="ECO:0000304"/>
    <property type="project" value="ParkinsonsUK-UCL"/>
</dbReference>
<dbReference type="GO" id="GO:0005768">
    <property type="term" value="C:endosome"/>
    <property type="evidence" value="ECO:0000314"/>
    <property type="project" value="UniProtKB"/>
</dbReference>
<dbReference type="GO" id="GO:0005925">
    <property type="term" value="C:focal adhesion"/>
    <property type="evidence" value="ECO:0007005"/>
    <property type="project" value="UniProtKB"/>
</dbReference>
<dbReference type="GO" id="GO:0005794">
    <property type="term" value="C:Golgi apparatus"/>
    <property type="evidence" value="ECO:0000318"/>
    <property type="project" value="GO_Central"/>
</dbReference>
<dbReference type="GO" id="GO:0000139">
    <property type="term" value="C:Golgi membrane"/>
    <property type="evidence" value="ECO:0000314"/>
    <property type="project" value="HGNC-UCL"/>
</dbReference>
<dbReference type="GO" id="GO:0005811">
    <property type="term" value="C:lipid droplet"/>
    <property type="evidence" value="ECO:0000304"/>
    <property type="project" value="Reactome"/>
</dbReference>
<dbReference type="GO" id="GO:0016020">
    <property type="term" value="C:membrane"/>
    <property type="evidence" value="ECO:0000314"/>
    <property type="project" value="AgBase"/>
</dbReference>
<dbReference type="GO" id="GO:0045121">
    <property type="term" value="C:membrane raft"/>
    <property type="evidence" value="ECO:0000314"/>
    <property type="project" value="UniProtKB"/>
</dbReference>
<dbReference type="GO" id="GO:0048471">
    <property type="term" value="C:perinuclear region of cytoplasm"/>
    <property type="evidence" value="ECO:0000314"/>
    <property type="project" value="UniProtKB"/>
</dbReference>
<dbReference type="GO" id="GO:0005886">
    <property type="term" value="C:plasma membrane"/>
    <property type="evidence" value="ECO:0000314"/>
    <property type="project" value="UniProtKB"/>
</dbReference>
<dbReference type="GO" id="GO:0032991">
    <property type="term" value="C:protein-containing complex"/>
    <property type="evidence" value="ECO:0000314"/>
    <property type="project" value="UniProtKB"/>
</dbReference>
<dbReference type="GO" id="GO:0051117">
    <property type="term" value="F:ATPase binding"/>
    <property type="evidence" value="ECO:0000353"/>
    <property type="project" value="ParkinsonsUK-UCL"/>
</dbReference>
<dbReference type="GO" id="GO:0015485">
    <property type="term" value="F:cholesterol binding"/>
    <property type="evidence" value="ECO:0000304"/>
    <property type="project" value="HGNC-UCL"/>
</dbReference>
<dbReference type="GO" id="GO:0019899">
    <property type="term" value="F:enzyme binding"/>
    <property type="evidence" value="ECO:0000353"/>
    <property type="project" value="UniProtKB"/>
</dbReference>
<dbReference type="GO" id="GO:0042802">
    <property type="term" value="F:identical protein binding"/>
    <property type="evidence" value="ECO:0000353"/>
    <property type="project" value="BHF-UCL"/>
</dbReference>
<dbReference type="GO" id="GO:0070320">
    <property type="term" value="F:inward rectifier potassium channel inhibitor activity"/>
    <property type="evidence" value="ECO:0000314"/>
    <property type="project" value="BHF-UCL"/>
</dbReference>
<dbReference type="GO" id="GO:0060090">
    <property type="term" value="F:molecular adaptor activity"/>
    <property type="evidence" value="ECO:0000318"/>
    <property type="project" value="GO_Central"/>
</dbReference>
<dbReference type="GO" id="GO:0050998">
    <property type="term" value="F:nitric-oxide synthase binding"/>
    <property type="evidence" value="ECO:0000353"/>
    <property type="project" value="BHF-UCL"/>
</dbReference>
<dbReference type="GO" id="GO:0036487">
    <property type="term" value="F:nitric-oxide synthase inhibitor activity"/>
    <property type="evidence" value="ECO:0000269"/>
    <property type="project" value="Reactome"/>
</dbReference>
<dbReference type="GO" id="GO:0008142">
    <property type="term" value="F:oxysterol binding"/>
    <property type="evidence" value="ECO:0000250"/>
    <property type="project" value="UniProtKB"/>
</dbReference>
<dbReference type="GO" id="GO:0005113">
    <property type="term" value="F:patched binding"/>
    <property type="evidence" value="ECO:0000303"/>
    <property type="project" value="BHF-UCL"/>
</dbReference>
<dbReference type="GO" id="GO:0016504">
    <property type="term" value="F:peptidase activator activity"/>
    <property type="evidence" value="ECO:0000250"/>
    <property type="project" value="BHF-UCL"/>
</dbReference>
<dbReference type="GO" id="GO:0046982">
    <property type="term" value="F:protein heterodimerization activity"/>
    <property type="evidence" value="ECO:0007669"/>
    <property type="project" value="Ensembl"/>
</dbReference>
<dbReference type="GO" id="GO:0019901">
    <property type="term" value="F:protein kinase binding"/>
    <property type="evidence" value="ECO:0000353"/>
    <property type="project" value="BHF-UCL"/>
</dbReference>
<dbReference type="GO" id="GO:0140311">
    <property type="term" value="F:protein sequestering activity"/>
    <property type="evidence" value="ECO:0000250"/>
    <property type="project" value="UniProt"/>
</dbReference>
<dbReference type="GO" id="GO:0030292">
    <property type="term" value="F:protein tyrosine kinase inhibitor activity"/>
    <property type="evidence" value="ECO:0000315"/>
    <property type="project" value="BHF-UCL"/>
</dbReference>
<dbReference type="GO" id="GO:0044877">
    <property type="term" value="F:protein-containing complex binding"/>
    <property type="evidence" value="ECO:0000353"/>
    <property type="project" value="ParkinsonsUK-UCL"/>
</dbReference>
<dbReference type="GO" id="GO:0030674">
    <property type="term" value="F:protein-macromolecule adaptor activity"/>
    <property type="evidence" value="ECO:0007669"/>
    <property type="project" value="Ensembl"/>
</dbReference>
<dbReference type="GO" id="GO:0005102">
    <property type="term" value="F:signaling receptor binding"/>
    <property type="evidence" value="ECO:0000353"/>
    <property type="project" value="BHF-UCL"/>
</dbReference>
<dbReference type="GO" id="GO:0031267">
    <property type="term" value="F:small GTPase binding"/>
    <property type="evidence" value="ECO:0000353"/>
    <property type="project" value="AgBase"/>
</dbReference>
<dbReference type="GO" id="GO:0044325">
    <property type="term" value="F:transmembrane transporter binding"/>
    <property type="evidence" value="ECO:0000353"/>
    <property type="project" value="BHF-UCL"/>
</dbReference>
<dbReference type="GO" id="GO:0001525">
    <property type="term" value="P:angiogenesis"/>
    <property type="evidence" value="ECO:0007669"/>
    <property type="project" value="Ensembl"/>
</dbReference>
<dbReference type="GO" id="GO:0038166">
    <property type="term" value="P:angiotensin-activated signaling pathway"/>
    <property type="evidence" value="ECO:0000250"/>
    <property type="project" value="BHF-UCL"/>
</dbReference>
<dbReference type="GO" id="GO:0097190">
    <property type="term" value="P:apoptotic signaling pathway"/>
    <property type="evidence" value="ECO:0000315"/>
    <property type="project" value="UniProtKB"/>
</dbReference>
<dbReference type="GO" id="GO:0071711">
    <property type="term" value="P:basement membrane organization"/>
    <property type="evidence" value="ECO:0007669"/>
    <property type="project" value="Ensembl"/>
</dbReference>
<dbReference type="GO" id="GO:0055074">
    <property type="term" value="P:calcium ion homeostasis"/>
    <property type="evidence" value="ECO:0000250"/>
    <property type="project" value="BHF-UCL"/>
</dbReference>
<dbReference type="GO" id="GO:0006816">
    <property type="term" value="P:calcium ion transport"/>
    <property type="evidence" value="ECO:0000250"/>
    <property type="project" value="BHF-UCL"/>
</dbReference>
<dbReference type="GO" id="GO:0060070">
    <property type="term" value="P:canonical Wnt signaling pathway"/>
    <property type="evidence" value="ECO:0000314"/>
    <property type="project" value="BHF-UCL"/>
</dbReference>
<dbReference type="GO" id="GO:0070836">
    <property type="term" value="P:caveola assembly"/>
    <property type="evidence" value="ECO:0000315"/>
    <property type="project" value="BHF-UCL"/>
</dbReference>
<dbReference type="GO" id="GO:0072584">
    <property type="term" value="P:caveolin-mediated endocytosis"/>
    <property type="evidence" value="ECO:0000314"/>
    <property type="project" value="UniProtKB"/>
</dbReference>
<dbReference type="GO" id="GO:0030154">
    <property type="term" value="P:cell differentiation"/>
    <property type="evidence" value="ECO:0000318"/>
    <property type="project" value="GO_Central"/>
</dbReference>
<dbReference type="GO" id="GO:0071360">
    <property type="term" value="P:cellular response to exogenous dsRNA"/>
    <property type="evidence" value="ECO:0000315"/>
    <property type="project" value="UniProtKB"/>
</dbReference>
<dbReference type="GO" id="GO:0071455">
    <property type="term" value="P:cellular response to hyperoxia"/>
    <property type="evidence" value="ECO:0000315"/>
    <property type="project" value="UniProtKB"/>
</dbReference>
<dbReference type="GO" id="GO:0071218">
    <property type="term" value="P:cellular response to misfolded protein"/>
    <property type="evidence" value="ECO:0000315"/>
    <property type="project" value="ParkinsonsUK-UCL"/>
</dbReference>
<dbReference type="GO" id="GO:0071375">
    <property type="term" value="P:cellular response to peptide hormone stimulus"/>
    <property type="evidence" value="ECO:0000250"/>
    <property type="project" value="BHF-UCL"/>
</dbReference>
<dbReference type="GO" id="GO:0009267">
    <property type="term" value="P:cellular response to starvation"/>
    <property type="evidence" value="ECO:0000270"/>
    <property type="project" value="BHF-UCL"/>
</dbReference>
<dbReference type="GO" id="GO:0071560">
    <property type="term" value="P:cellular response to transforming growth factor beta stimulus"/>
    <property type="evidence" value="ECO:0007669"/>
    <property type="project" value="Ensembl"/>
</dbReference>
<dbReference type="GO" id="GO:0042632">
    <property type="term" value="P:cholesterol homeostasis"/>
    <property type="evidence" value="ECO:0000250"/>
    <property type="project" value="BHF-UCL"/>
</dbReference>
<dbReference type="GO" id="GO:0030301">
    <property type="term" value="P:cholesterol transport"/>
    <property type="evidence" value="ECO:0000304"/>
    <property type="project" value="HGNC-UCL"/>
</dbReference>
<dbReference type="GO" id="GO:0019221">
    <property type="term" value="P:cytokine-mediated signaling pathway"/>
    <property type="evidence" value="ECO:0007669"/>
    <property type="project" value="Ensembl"/>
</dbReference>
<dbReference type="GO" id="GO:0001935">
    <property type="term" value="P:endothelial cell proliferation"/>
    <property type="evidence" value="ECO:0007669"/>
    <property type="project" value="Ensembl"/>
</dbReference>
<dbReference type="GO" id="GO:0051649">
    <property type="term" value="P:establishment of localization in cell"/>
    <property type="evidence" value="ECO:0007669"/>
    <property type="project" value="Ensembl"/>
</dbReference>
<dbReference type="GO" id="GO:0048144">
    <property type="term" value="P:fibroblast proliferation"/>
    <property type="evidence" value="ECO:0007669"/>
    <property type="project" value="Ensembl"/>
</dbReference>
<dbReference type="GO" id="GO:0002067">
    <property type="term" value="P:glandular epithelial cell differentiation"/>
    <property type="evidence" value="ECO:0007669"/>
    <property type="project" value="Ensembl"/>
</dbReference>
<dbReference type="GO" id="GO:0038016">
    <property type="term" value="P:insulin receptor internalization"/>
    <property type="evidence" value="ECO:0007669"/>
    <property type="project" value="Ensembl"/>
</dbReference>
<dbReference type="GO" id="GO:0006874">
    <property type="term" value="P:intracellular calcium ion homeostasis"/>
    <property type="evidence" value="ECO:0000250"/>
    <property type="project" value="BHF-UCL"/>
</dbReference>
<dbReference type="GO" id="GO:0033484">
    <property type="term" value="P:intracellular nitric oxide homeostasis"/>
    <property type="evidence" value="ECO:0000250"/>
    <property type="project" value="BHF-UCL"/>
</dbReference>
<dbReference type="GO" id="GO:0007595">
    <property type="term" value="P:lactation"/>
    <property type="evidence" value="ECO:0007669"/>
    <property type="project" value="Ensembl"/>
</dbReference>
<dbReference type="GO" id="GO:0019915">
    <property type="term" value="P:lipid storage"/>
    <property type="evidence" value="ECO:0000250"/>
    <property type="project" value="BHF-UCL"/>
</dbReference>
<dbReference type="GO" id="GO:0032507">
    <property type="term" value="P:maintenance of protein location in cell"/>
    <property type="evidence" value="ECO:0000250"/>
    <property type="project" value="BHF-UCL"/>
</dbReference>
<dbReference type="GO" id="GO:0030879">
    <property type="term" value="P:mammary gland development"/>
    <property type="evidence" value="ECO:0000250"/>
    <property type="project" value="BHF-UCL"/>
</dbReference>
<dbReference type="GO" id="GO:0060056">
    <property type="term" value="P:mammary gland involution"/>
    <property type="evidence" value="ECO:0000250"/>
    <property type="project" value="BHF-UCL"/>
</dbReference>
<dbReference type="GO" id="GO:0000165">
    <property type="term" value="P:MAPK cascade"/>
    <property type="evidence" value="ECO:0007669"/>
    <property type="project" value="Ensembl"/>
</dbReference>
<dbReference type="GO" id="GO:0051899">
    <property type="term" value="P:membrane depolarization"/>
    <property type="evidence" value="ECO:0000250"/>
    <property type="project" value="BHF-UCL"/>
</dbReference>
<dbReference type="GO" id="GO:0046716">
    <property type="term" value="P:muscle cell cellular homeostasis"/>
    <property type="evidence" value="ECO:0007669"/>
    <property type="project" value="Ensembl"/>
</dbReference>
<dbReference type="GO" id="GO:2000811">
    <property type="term" value="P:negative regulation of anoikis"/>
    <property type="evidence" value="ECO:0000315"/>
    <property type="project" value="UniProtKB"/>
</dbReference>
<dbReference type="GO" id="GO:0030514">
    <property type="term" value="P:negative regulation of BMP signaling pathway"/>
    <property type="evidence" value="ECO:0000314"/>
    <property type="project" value="BHF-UCL"/>
</dbReference>
<dbReference type="GO" id="GO:0090090">
    <property type="term" value="P:negative regulation of canonical Wnt signaling pathway"/>
    <property type="evidence" value="ECO:0000250"/>
    <property type="project" value="UniProtKB"/>
</dbReference>
<dbReference type="GO" id="GO:0001960">
    <property type="term" value="P:negative regulation of cytokine-mediated signaling pathway"/>
    <property type="evidence" value="ECO:0007669"/>
    <property type="project" value="Ensembl"/>
</dbReference>
<dbReference type="GO" id="GO:0001937">
    <property type="term" value="P:negative regulation of endothelial cell proliferation"/>
    <property type="evidence" value="ECO:0000250"/>
    <property type="project" value="BHF-UCL"/>
</dbReference>
<dbReference type="GO" id="GO:0030857">
    <property type="term" value="P:negative regulation of epithelial cell differentiation"/>
    <property type="evidence" value="ECO:0000250"/>
    <property type="project" value="BHF-UCL"/>
</dbReference>
<dbReference type="GO" id="GO:0048147">
    <property type="term" value="P:negative regulation of fibroblast proliferation"/>
    <property type="evidence" value="ECO:0007669"/>
    <property type="project" value="Ensembl"/>
</dbReference>
<dbReference type="GO" id="GO:0043409">
    <property type="term" value="P:negative regulation of MAPK cascade"/>
    <property type="evidence" value="ECO:0000250"/>
    <property type="project" value="BHF-UCL"/>
</dbReference>
<dbReference type="GO" id="GO:0060546">
    <property type="term" value="P:negative regulation of necroptotic process"/>
    <property type="evidence" value="ECO:0007669"/>
    <property type="project" value="Ensembl"/>
</dbReference>
<dbReference type="GO" id="GO:0045019">
    <property type="term" value="P:negative regulation of nitric oxide biosynthetic process"/>
    <property type="evidence" value="ECO:0000250"/>
    <property type="project" value="BHF-UCL"/>
</dbReference>
<dbReference type="GO" id="GO:0048550">
    <property type="term" value="P:negative regulation of pinocytosis"/>
    <property type="evidence" value="ECO:0000315"/>
    <property type="project" value="UniProtKB"/>
</dbReference>
<dbReference type="GO" id="GO:1901380">
    <property type="term" value="P:negative regulation of potassium ion transmembrane transport"/>
    <property type="evidence" value="ECO:0000315"/>
    <property type="project" value="BHF-UCL"/>
</dbReference>
<dbReference type="GO" id="GO:0031397">
    <property type="term" value="P:negative regulation of protein ubiquitination"/>
    <property type="evidence" value="ECO:0000315"/>
    <property type="project" value="UniProtKB"/>
</dbReference>
<dbReference type="GO" id="GO:0046426">
    <property type="term" value="P:negative regulation of receptor signaling pathway via JAK-STAT"/>
    <property type="evidence" value="ECO:0000250"/>
    <property type="project" value="BHF-UCL"/>
</dbReference>
<dbReference type="GO" id="GO:0000122">
    <property type="term" value="P:negative regulation of transcription by RNA polymerase II"/>
    <property type="evidence" value="ECO:0000250"/>
    <property type="project" value="UniProtKB"/>
</dbReference>
<dbReference type="GO" id="GO:0006809">
    <property type="term" value="P:nitric oxide biosynthetic process"/>
    <property type="evidence" value="ECO:0007669"/>
    <property type="project" value="Ensembl"/>
</dbReference>
<dbReference type="GO" id="GO:0046209">
    <property type="term" value="P:nitric oxide metabolic process"/>
    <property type="evidence" value="ECO:0000304"/>
    <property type="project" value="Reactome"/>
</dbReference>
<dbReference type="GO" id="GO:0010524">
    <property type="term" value="P:positive regulation of calcium ion transport into cytosol"/>
    <property type="evidence" value="ECO:0000250"/>
    <property type="project" value="BHF-UCL"/>
</dbReference>
<dbReference type="GO" id="GO:0043123">
    <property type="term" value="P:positive regulation of canonical NF-kappaB signal transduction"/>
    <property type="evidence" value="ECO:0000315"/>
    <property type="project" value="ARUK-UCL"/>
</dbReference>
<dbReference type="GO" id="GO:0060355">
    <property type="term" value="P:positive regulation of cell adhesion molecule production"/>
    <property type="evidence" value="ECO:0000315"/>
    <property type="project" value="UniProtKB"/>
</dbReference>
<dbReference type="GO" id="GO:0030335">
    <property type="term" value="P:positive regulation of cell migration"/>
    <property type="evidence" value="ECO:0000315"/>
    <property type="project" value="BHF-UCL"/>
</dbReference>
<dbReference type="GO" id="GO:0010875">
    <property type="term" value="P:positive regulation of cholesterol efflux"/>
    <property type="evidence" value="ECO:0000314"/>
    <property type="project" value="ARUK-UCL"/>
</dbReference>
<dbReference type="GO" id="GO:0120162">
    <property type="term" value="P:positive regulation of cold-induced thermogenesis"/>
    <property type="evidence" value="ECO:0000250"/>
    <property type="project" value="YuBioLab"/>
</dbReference>
<dbReference type="GO" id="GO:1904294">
    <property type="term" value="P:positive regulation of ERAD pathway"/>
    <property type="evidence" value="ECO:0000315"/>
    <property type="project" value="ParkinsonsUK-UCL"/>
</dbReference>
<dbReference type="GO" id="GO:2001238">
    <property type="term" value="P:positive regulation of extrinsic apoptotic signaling pathway"/>
    <property type="evidence" value="ECO:0000315"/>
    <property type="project" value="UniProtKB"/>
</dbReference>
<dbReference type="GO" id="GO:1903598">
    <property type="term" value="P:positive regulation of gap junction assembly"/>
    <property type="evidence" value="ECO:0000250"/>
    <property type="project" value="BHF-UCL"/>
</dbReference>
<dbReference type="GO" id="GO:0010628">
    <property type="term" value="P:positive regulation of gene expression"/>
    <property type="evidence" value="ECO:0007669"/>
    <property type="project" value="Ensembl"/>
</dbReference>
<dbReference type="GO" id="GO:2001244">
    <property type="term" value="P:positive regulation of intrinsic apoptotic signaling pathway"/>
    <property type="evidence" value="ECO:0000315"/>
    <property type="project" value="UniProtKB"/>
</dbReference>
<dbReference type="GO" id="GO:0031398">
    <property type="term" value="P:positive regulation of protein ubiquitination"/>
    <property type="evidence" value="ECO:0000315"/>
    <property type="project" value="ParkinsonsUK-UCL"/>
</dbReference>
<dbReference type="GO" id="GO:0034141">
    <property type="term" value="P:positive regulation of toll-like receptor 3 signaling pathway"/>
    <property type="evidence" value="ECO:0000315"/>
    <property type="project" value="UniProtKB"/>
</dbReference>
<dbReference type="GO" id="GO:0045907">
    <property type="term" value="P:positive regulation of vasoconstriction"/>
    <property type="evidence" value="ECO:0000250"/>
    <property type="project" value="BHF-UCL"/>
</dbReference>
<dbReference type="GO" id="GO:0010608">
    <property type="term" value="P:post-transcriptional regulation of gene expression"/>
    <property type="evidence" value="ECO:0007669"/>
    <property type="project" value="Ensembl"/>
</dbReference>
<dbReference type="GO" id="GO:0008104">
    <property type="term" value="P:protein localization"/>
    <property type="evidence" value="ECO:0000250"/>
    <property type="project" value="BHF-UCL"/>
</dbReference>
<dbReference type="GO" id="GO:1903361">
    <property type="term" value="P:protein localization to basolateral plasma membrane"/>
    <property type="evidence" value="ECO:0000250"/>
    <property type="project" value="BHF-UCL"/>
</dbReference>
<dbReference type="GO" id="GO:0044860">
    <property type="term" value="P:protein localization to plasma membrane raft"/>
    <property type="evidence" value="ECO:0000250"/>
    <property type="project" value="BHF-UCL"/>
</dbReference>
<dbReference type="GO" id="GO:0015031">
    <property type="term" value="P:protein transport"/>
    <property type="evidence" value="ECO:0007669"/>
    <property type="project" value="Ensembl"/>
</dbReference>
<dbReference type="GO" id="GO:0031623">
    <property type="term" value="P:receptor internalization"/>
    <property type="evidence" value="ECO:0000314"/>
    <property type="project" value="UniProtKB"/>
</dbReference>
<dbReference type="GO" id="GO:0019065">
    <property type="term" value="P:receptor-mediated endocytosis of virus by host cell"/>
    <property type="evidence" value="ECO:0000316"/>
    <property type="project" value="CACAO"/>
</dbReference>
<dbReference type="GO" id="GO:0030193">
    <property type="term" value="P:regulation of blood coagulation"/>
    <property type="evidence" value="ECO:0000315"/>
    <property type="project" value="BHF-UCL"/>
</dbReference>
<dbReference type="GO" id="GO:0098909">
    <property type="term" value="P:regulation of cardiac muscle cell action potential involved in regulation of contraction"/>
    <property type="evidence" value="ECO:0000305"/>
    <property type="project" value="BHF-UCL"/>
</dbReference>
<dbReference type="GO" id="GO:1901844">
    <property type="term" value="P:regulation of cell communication by electrical coupling involved in cardiac conduction"/>
    <property type="evidence" value="ECO:0000250"/>
    <property type="project" value="BHF-UCL"/>
</dbReference>
<dbReference type="GO" id="GO:0051480">
    <property type="term" value="P:regulation of cytosolic calcium ion concentration"/>
    <property type="evidence" value="ECO:0000314"/>
    <property type="project" value="BHF-UCL"/>
</dbReference>
<dbReference type="GO" id="GO:2000535">
    <property type="term" value="P:regulation of entry of bacterium into host cell"/>
    <property type="evidence" value="ECO:0000314"/>
    <property type="project" value="AgBase"/>
</dbReference>
<dbReference type="GO" id="GO:0019217">
    <property type="term" value="P:regulation of fatty acid metabolic process"/>
    <property type="evidence" value="ECO:0000250"/>
    <property type="project" value="BHF-UCL"/>
</dbReference>
<dbReference type="GO" id="GO:0086091">
    <property type="term" value="P:regulation of heart rate by cardiac conduction"/>
    <property type="evidence" value="ECO:0000250"/>
    <property type="project" value="BHF-UCL"/>
</dbReference>
<dbReference type="GO" id="GO:0098903">
    <property type="term" value="P:regulation of membrane repolarization during action potential"/>
    <property type="evidence" value="ECO:0000315"/>
    <property type="project" value="BHF-UCL"/>
</dbReference>
<dbReference type="GO" id="GO:1900027">
    <property type="term" value="P:regulation of ruffle assembly"/>
    <property type="evidence" value="ECO:0000314"/>
    <property type="project" value="AgBase"/>
</dbReference>
<dbReference type="GO" id="GO:0006940">
    <property type="term" value="P:regulation of smooth muscle contraction"/>
    <property type="evidence" value="ECO:0000250"/>
    <property type="project" value="BHF-UCL"/>
</dbReference>
<dbReference type="GO" id="GO:0003057">
    <property type="term" value="P:regulation of the force of heart contraction by chemical signal"/>
    <property type="evidence" value="ECO:0007669"/>
    <property type="project" value="Ensembl"/>
</dbReference>
<dbReference type="GO" id="GO:0098911">
    <property type="term" value="P:regulation of ventricular cardiac muscle cell action potential"/>
    <property type="evidence" value="ECO:0000250"/>
    <property type="project" value="BHF-UCL"/>
</dbReference>
<dbReference type="GO" id="GO:0009617">
    <property type="term" value="P:response to bacterium"/>
    <property type="evidence" value="ECO:0000314"/>
    <property type="project" value="AgBase"/>
</dbReference>
<dbReference type="GO" id="GO:0051592">
    <property type="term" value="P:response to calcium ion"/>
    <property type="evidence" value="ECO:0000250"/>
    <property type="project" value="BHF-UCL"/>
</dbReference>
<dbReference type="GO" id="GO:0043627">
    <property type="term" value="P:response to estrogen"/>
    <property type="evidence" value="ECO:0000314"/>
    <property type="project" value="MGI"/>
</dbReference>
<dbReference type="GO" id="GO:0001666">
    <property type="term" value="P:response to hypoxia"/>
    <property type="evidence" value="ECO:0000250"/>
    <property type="project" value="BHF-UCL"/>
</dbReference>
<dbReference type="GO" id="GO:0002931">
    <property type="term" value="P:response to ischemia"/>
    <property type="evidence" value="ECO:0007669"/>
    <property type="project" value="Ensembl"/>
</dbReference>
<dbReference type="GO" id="GO:0032570">
    <property type="term" value="P:response to progesterone"/>
    <property type="evidence" value="ECO:0000314"/>
    <property type="project" value="MGI"/>
</dbReference>
<dbReference type="GO" id="GO:0007519">
    <property type="term" value="P:skeletal muscle tissue development"/>
    <property type="evidence" value="ECO:0000250"/>
    <property type="project" value="BHF-UCL"/>
</dbReference>
<dbReference type="GO" id="GO:0031295">
    <property type="term" value="P:T cell costimulation"/>
    <property type="evidence" value="ECO:0000314"/>
    <property type="project" value="UniProtKB"/>
</dbReference>
<dbReference type="GO" id="GO:0006641">
    <property type="term" value="P:triglyceride metabolic process"/>
    <property type="evidence" value="ECO:0000250"/>
    <property type="project" value="BHF-UCL"/>
</dbReference>
<dbReference type="GO" id="GO:0001570">
    <property type="term" value="P:vasculogenesis"/>
    <property type="evidence" value="ECO:0000250"/>
    <property type="project" value="BHF-UCL"/>
</dbReference>
<dbReference type="GO" id="GO:0042310">
    <property type="term" value="P:vasoconstriction"/>
    <property type="evidence" value="ECO:0007669"/>
    <property type="project" value="Ensembl"/>
</dbReference>
<dbReference type="GO" id="GO:0016050">
    <property type="term" value="P:vesicle organization"/>
    <property type="evidence" value="ECO:0000250"/>
    <property type="project" value="BHF-UCL"/>
</dbReference>
<dbReference type="InterPro" id="IPR001612">
    <property type="entry name" value="Caveolin"/>
</dbReference>
<dbReference type="InterPro" id="IPR018361">
    <property type="entry name" value="Caveolin_CS"/>
</dbReference>
<dbReference type="PANTHER" id="PTHR10844">
    <property type="entry name" value="CAVEOLIN"/>
    <property type="match status" value="1"/>
</dbReference>
<dbReference type="PANTHER" id="PTHR10844:SF18">
    <property type="entry name" value="CAVEOLIN-1"/>
    <property type="match status" value="1"/>
</dbReference>
<dbReference type="Pfam" id="PF01146">
    <property type="entry name" value="Caveolin"/>
    <property type="match status" value="1"/>
</dbReference>
<dbReference type="PROSITE" id="PS01210">
    <property type="entry name" value="CAVEOLIN"/>
    <property type="match status" value="1"/>
</dbReference>
<accession>Q03135</accession>
<accession>Q9UGP1</accession>
<accession>Q9UNG1</accession>
<accession>Q9UQH6</accession>
<proteinExistence type="evidence at protein level"/>